<keyword id="KW-0002">3D-structure</keyword>
<keyword id="KW-0007">Acetylation</keyword>
<keyword id="KW-0046">Antibiotic resistance</keyword>
<keyword id="KW-0903">Direct protein sequencing</keyword>
<keyword id="KW-1185">Reference proteome</keyword>
<keyword id="KW-0687">Ribonucleoprotein</keyword>
<keyword id="KW-0689">Ribosomal protein</keyword>
<keyword id="KW-0694">RNA-binding</keyword>
<keyword id="KW-0699">rRNA-binding</keyword>
<dbReference type="EMBL" id="X01563">
    <property type="protein sequence ID" value="CAA25722.1"/>
    <property type="molecule type" value="Genomic_DNA"/>
</dbReference>
<dbReference type="EMBL" id="U18997">
    <property type="protein sequence ID" value="AAA58100.1"/>
    <property type="molecule type" value="Genomic_DNA"/>
</dbReference>
<dbReference type="EMBL" id="U00096">
    <property type="protein sequence ID" value="AAC76328.1"/>
    <property type="molecule type" value="Genomic_DNA"/>
</dbReference>
<dbReference type="EMBL" id="AP009048">
    <property type="protein sequence ID" value="BAE77988.1"/>
    <property type="molecule type" value="Genomic_DNA"/>
</dbReference>
<dbReference type="PIR" id="B65123">
    <property type="entry name" value="R3EC5"/>
</dbReference>
<dbReference type="RefSeq" id="NP_417762.1">
    <property type="nucleotide sequence ID" value="NC_000913.3"/>
</dbReference>
<dbReference type="RefSeq" id="WP_000940121.1">
    <property type="nucleotide sequence ID" value="NZ_STEB01000038.1"/>
</dbReference>
<dbReference type="PDB" id="1EG0">
    <property type="method" value="EM"/>
    <property type="resolution" value="11.50 A"/>
    <property type="chains" value="B=1-148"/>
</dbReference>
<dbReference type="PDB" id="2YKR">
    <property type="method" value="EM"/>
    <property type="resolution" value="9.80 A"/>
    <property type="chains" value="E=10-159"/>
</dbReference>
<dbReference type="PDB" id="3IY8">
    <property type="method" value="EM"/>
    <property type="resolution" value="14.10 A"/>
    <property type="chains" value="E=10-159"/>
</dbReference>
<dbReference type="PDB" id="3J9Y">
    <property type="method" value="EM"/>
    <property type="resolution" value="3.90 A"/>
    <property type="chains" value="e=1-167"/>
</dbReference>
<dbReference type="PDB" id="3J9Z">
    <property type="method" value="EM"/>
    <property type="resolution" value="3.60 A"/>
    <property type="chains" value="SE=2-167"/>
</dbReference>
<dbReference type="PDB" id="3JA1">
    <property type="method" value="EM"/>
    <property type="resolution" value="3.60 A"/>
    <property type="chains" value="SE=2-167"/>
</dbReference>
<dbReference type="PDB" id="3JBU">
    <property type="method" value="EM"/>
    <property type="resolution" value="3.64 A"/>
    <property type="chains" value="E=1-167"/>
</dbReference>
<dbReference type="PDB" id="3JBV">
    <property type="method" value="EM"/>
    <property type="resolution" value="3.32 A"/>
    <property type="chains" value="E=1-167"/>
</dbReference>
<dbReference type="PDB" id="3JCD">
    <property type="method" value="EM"/>
    <property type="resolution" value="3.70 A"/>
    <property type="chains" value="e=1-167"/>
</dbReference>
<dbReference type="PDB" id="3JCE">
    <property type="method" value="EM"/>
    <property type="resolution" value="3.20 A"/>
    <property type="chains" value="e=1-167"/>
</dbReference>
<dbReference type="PDB" id="3JCJ">
    <property type="method" value="EM"/>
    <property type="resolution" value="3.70 A"/>
    <property type="chains" value="k=1-167"/>
</dbReference>
<dbReference type="PDB" id="3JCN">
    <property type="method" value="EM"/>
    <property type="resolution" value="4.60 A"/>
    <property type="chains" value="f=1-159"/>
</dbReference>
<dbReference type="PDB" id="4A2I">
    <property type="method" value="EM"/>
    <property type="resolution" value="16.50 A"/>
    <property type="chains" value="E=10-159"/>
</dbReference>
<dbReference type="PDB" id="4ADV">
    <property type="method" value="EM"/>
    <property type="resolution" value="13.50 A"/>
    <property type="chains" value="E=2-167"/>
</dbReference>
<dbReference type="PDB" id="4U1U">
    <property type="method" value="X-ray"/>
    <property type="resolution" value="2.95 A"/>
    <property type="chains" value="AE/CE=10-159"/>
</dbReference>
<dbReference type="PDB" id="4U1V">
    <property type="method" value="X-ray"/>
    <property type="resolution" value="3.00 A"/>
    <property type="chains" value="AE/CE=10-159"/>
</dbReference>
<dbReference type="PDB" id="4U20">
    <property type="method" value="X-ray"/>
    <property type="resolution" value="2.90 A"/>
    <property type="chains" value="AE/CE=10-159"/>
</dbReference>
<dbReference type="PDB" id="4U24">
    <property type="method" value="X-ray"/>
    <property type="resolution" value="2.90 A"/>
    <property type="chains" value="AE/CE=10-159"/>
</dbReference>
<dbReference type="PDB" id="4U25">
    <property type="method" value="X-ray"/>
    <property type="resolution" value="2.90 A"/>
    <property type="chains" value="AE/CE=10-159"/>
</dbReference>
<dbReference type="PDB" id="4U26">
    <property type="method" value="X-ray"/>
    <property type="resolution" value="2.80 A"/>
    <property type="chains" value="AE/CE=10-159"/>
</dbReference>
<dbReference type="PDB" id="4U27">
    <property type="method" value="X-ray"/>
    <property type="resolution" value="2.80 A"/>
    <property type="chains" value="AE/CE=10-159"/>
</dbReference>
<dbReference type="PDB" id="4V47">
    <property type="method" value="EM"/>
    <property type="resolution" value="12.30 A"/>
    <property type="chains" value="BE=2-167"/>
</dbReference>
<dbReference type="PDB" id="4V48">
    <property type="method" value="EM"/>
    <property type="resolution" value="11.50 A"/>
    <property type="chains" value="BE=2-167"/>
</dbReference>
<dbReference type="PDB" id="4V4H">
    <property type="method" value="X-ray"/>
    <property type="resolution" value="3.46 A"/>
    <property type="chains" value="AE/CE=1-167"/>
</dbReference>
<dbReference type="PDB" id="4V4Q">
    <property type="method" value="X-ray"/>
    <property type="resolution" value="3.46 A"/>
    <property type="chains" value="AE/CE=2-167"/>
</dbReference>
<dbReference type="PDB" id="4V4V">
    <property type="method" value="EM"/>
    <property type="resolution" value="15.00 A"/>
    <property type="chains" value="AE=10-157"/>
</dbReference>
<dbReference type="PDB" id="4V4W">
    <property type="method" value="EM"/>
    <property type="resolution" value="15.00 A"/>
    <property type="chains" value="AE=10-157"/>
</dbReference>
<dbReference type="PDB" id="4V50">
    <property type="method" value="X-ray"/>
    <property type="resolution" value="3.22 A"/>
    <property type="chains" value="AE/CE=2-167"/>
</dbReference>
<dbReference type="PDB" id="4V52">
    <property type="method" value="X-ray"/>
    <property type="resolution" value="3.21 A"/>
    <property type="chains" value="AE/CE=2-167"/>
</dbReference>
<dbReference type="PDB" id="4V53">
    <property type="method" value="X-ray"/>
    <property type="resolution" value="3.54 A"/>
    <property type="chains" value="AE/CE=2-167"/>
</dbReference>
<dbReference type="PDB" id="4V54">
    <property type="method" value="X-ray"/>
    <property type="resolution" value="3.30 A"/>
    <property type="chains" value="AE/CE=2-167"/>
</dbReference>
<dbReference type="PDB" id="4V55">
    <property type="method" value="X-ray"/>
    <property type="resolution" value="4.00 A"/>
    <property type="chains" value="AE/CE=2-167"/>
</dbReference>
<dbReference type="PDB" id="4V56">
    <property type="method" value="X-ray"/>
    <property type="resolution" value="3.93 A"/>
    <property type="chains" value="AE/CE=2-167"/>
</dbReference>
<dbReference type="PDB" id="4V57">
    <property type="method" value="X-ray"/>
    <property type="resolution" value="3.50 A"/>
    <property type="chains" value="AE/CE=2-167"/>
</dbReference>
<dbReference type="PDB" id="4V5B">
    <property type="method" value="X-ray"/>
    <property type="resolution" value="3.74 A"/>
    <property type="chains" value="BE/DE=2-167"/>
</dbReference>
<dbReference type="PDB" id="4V5H">
    <property type="method" value="EM"/>
    <property type="resolution" value="5.80 A"/>
    <property type="chains" value="AE=10-159"/>
</dbReference>
<dbReference type="PDB" id="4V5Y">
    <property type="method" value="X-ray"/>
    <property type="resolution" value="4.45 A"/>
    <property type="chains" value="AE/CE=2-167"/>
</dbReference>
<dbReference type="PDB" id="4V64">
    <property type="method" value="X-ray"/>
    <property type="resolution" value="3.50 A"/>
    <property type="chains" value="AE/CE=2-167"/>
</dbReference>
<dbReference type="PDB" id="4V65">
    <property type="method" value="EM"/>
    <property type="resolution" value="9.00 A"/>
    <property type="chains" value="AS=1-159"/>
</dbReference>
<dbReference type="PDB" id="4V66">
    <property type="method" value="EM"/>
    <property type="resolution" value="9.00 A"/>
    <property type="chains" value="AS=1-159"/>
</dbReference>
<dbReference type="PDB" id="4V69">
    <property type="method" value="EM"/>
    <property type="resolution" value="6.70 A"/>
    <property type="chains" value="AE=10-159"/>
</dbReference>
<dbReference type="PDB" id="4V6C">
    <property type="method" value="X-ray"/>
    <property type="resolution" value="3.19 A"/>
    <property type="chains" value="AE/CE=1-167"/>
</dbReference>
<dbReference type="PDB" id="4V6D">
    <property type="method" value="X-ray"/>
    <property type="resolution" value="3.81 A"/>
    <property type="chains" value="AE/CE=1-167"/>
</dbReference>
<dbReference type="PDB" id="4V6E">
    <property type="method" value="X-ray"/>
    <property type="resolution" value="3.71 A"/>
    <property type="chains" value="AE/CE=1-167"/>
</dbReference>
<dbReference type="PDB" id="4V6K">
    <property type="method" value="EM"/>
    <property type="resolution" value="8.25 A"/>
    <property type="chains" value="BI=1-167"/>
</dbReference>
<dbReference type="PDB" id="4V6L">
    <property type="method" value="EM"/>
    <property type="resolution" value="13.20 A"/>
    <property type="chains" value="AI=1-167"/>
</dbReference>
<dbReference type="PDB" id="4V6M">
    <property type="method" value="EM"/>
    <property type="resolution" value="7.10 A"/>
    <property type="chains" value="AE=2-167"/>
</dbReference>
<dbReference type="PDB" id="4V6N">
    <property type="method" value="EM"/>
    <property type="resolution" value="12.10 A"/>
    <property type="chains" value="BH=2-167"/>
</dbReference>
<dbReference type="PDB" id="4V6O">
    <property type="method" value="EM"/>
    <property type="resolution" value="14.70 A"/>
    <property type="chains" value="AH=2-167"/>
</dbReference>
<dbReference type="PDB" id="4V6P">
    <property type="method" value="EM"/>
    <property type="resolution" value="13.50 A"/>
    <property type="chains" value="AH=2-167"/>
</dbReference>
<dbReference type="PDB" id="4V6Q">
    <property type="method" value="EM"/>
    <property type="resolution" value="11.50 A"/>
    <property type="chains" value="AH=2-167"/>
</dbReference>
<dbReference type="PDB" id="4V6R">
    <property type="method" value="EM"/>
    <property type="resolution" value="11.50 A"/>
    <property type="chains" value="AH=2-167"/>
</dbReference>
<dbReference type="PDB" id="4V6S">
    <property type="method" value="EM"/>
    <property type="resolution" value="13.10 A"/>
    <property type="chains" value="BG=2-167"/>
</dbReference>
<dbReference type="PDB" id="4V6T">
    <property type="method" value="EM"/>
    <property type="resolution" value="8.30 A"/>
    <property type="chains" value="AE=10-159"/>
</dbReference>
<dbReference type="PDB" id="4V6V">
    <property type="method" value="EM"/>
    <property type="resolution" value="9.80 A"/>
    <property type="chains" value="AE=2-167"/>
</dbReference>
<dbReference type="PDB" id="4V6Y">
    <property type="method" value="EM"/>
    <property type="resolution" value="12.00 A"/>
    <property type="chains" value="AE=10-159"/>
</dbReference>
<dbReference type="PDB" id="4V6Z">
    <property type="method" value="EM"/>
    <property type="resolution" value="12.00 A"/>
    <property type="chains" value="AE=10-159"/>
</dbReference>
<dbReference type="PDB" id="4V70">
    <property type="method" value="EM"/>
    <property type="resolution" value="17.00 A"/>
    <property type="chains" value="AE=10-159"/>
</dbReference>
<dbReference type="PDB" id="4V71">
    <property type="method" value="EM"/>
    <property type="resolution" value="20.00 A"/>
    <property type="chains" value="AE=10-159"/>
</dbReference>
<dbReference type="PDB" id="4V72">
    <property type="method" value="EM"/>
    <property type="resolution" value="13.00 A"/>
    <property type="chains" value="AE=10-159"/>
</dbReference>
<dbReference type="PDB" id="4V73">
    <property type="method" value="EM"/>
    <property type="resolution" value="15.00 A"/>
    <property type="chains" value="AE=10-159"/>
</dbReference>
<dbReference type="PDB" id="4V74">
    <property type="method" value="EM"/>
    <property type="resolution" value="17.00 A"/>
    <property type="chains" value="AE=10-159"/>
</dbReference>
<dbReference type="PDB" id="4V75">
    <property type="method" value="EM"/>
    <property type="resolution" value="12.00 A"/>
    <property type="chains" value="AE=10-159"/>
</dbReference>
<dbReference type="PDB" id="4V76">
    <property type="method" value="EM"/>
    <property type="resolution" value="17.00 A"/>
    <property type="chains" value="AE=10-159"/>
</dbReference>
<dbReference type="PDB" id="4V77">
    <property type="method" value="EM"/>
    <property type="resolution" value="17.00 A"/>
    <property type="chains" value="AE=10-159"/>
</dbReference>
<dbReference type="PDB" id="4V78">
    <property type="method" value="EM"/>
    <property type="resolution" value="20.00 A"/>
    <property type="chains" value="AE=10-159"/>
</dbReference>
<dbReference type="PDB" id="4V79">
    <property type="method" value="EM"/>
    <property type="resolution" value="15.00 A"/>
    <property type="chains" value="AE=10-159"/>
</dbReference>
<dbReference type="PDB" id="4V7A">
    <property type="method" value="EM"/>
    <property type="resolution" value="9.00 A"/>
    <property type="chains" value="AE=10-159"/>
</dbReference>
<dbReference type="PDB" id="4V7B">
    <property type="method" value="EM"/>
    <property type="resolution" value="6.80 A"/>
    <property type="chains" value="AE=1-167"/>
</dbReference>
<dbReference type="PDB" id="4V7C">
    <property type="method" value="EM"/>
    <property type="resolution" value="7.60 A"/>
    <property type="chains" value="AE=2-167"/>
</dbReference>
<dbReference type="PDB" id="4V7D">
    <property type="method" value="EM"/>
    <property type="resolution" value="7.60 A"/>
    <property type="chains" value="BE=2-167"/>
</dbReference>
<dbReference type="PDB" id="4V7I">
    <property type="method" value="EM"/>
    <property type="resolution" value="9.60 A"/>
    <property type="chains" value="BE=1-167"/>
</dbReference>
<dbReference type="PDB" id="4V7S">
    <property type="method" value="X-ray"/>
    <property type="resolution" value="3.25 A"/>
    <property type="chains" value="AE/CE=10-159"/>
</dbReference>
<dbReference type="PDB" id="4V7T">
    <property type="method" value="X-ray"/>
    <property type="resolution" value="3.19 A"/>
    <property type="chains" value="AE/CE=10-159"/>
</dbReference>
<dbReference type="PDB" id="4V7U">
    <property type="method" value="X-ray"/>
    <property type="resolution" value="3.10 A"/>
    <property type="chains" value="AE/CE=10-159"/>
</dbReference>
<dbReference type="PDB" id="4V7V">
    <property type="method" value="X-ray"/>
    <property type="resolution" value="3.29 A"/>
    <property type="chains" value="AE/CE=10-159"/>
</dbReference>
<dbReference type="PDB" id="4V85">
    <property type="method" value="X-ray"/>
    <property type="resolution" value="3.20 A"/>
    <property type="chains" value="AE=1-167"/>
</dbReference>
<dbReference type="PDB" id="4V89">
    <property type="method" value="X-ray"/>
    <property type="resolution" value="3.70 A"/>
    <property type="chains" value="AE=1-167"/>
</dbReference>
<dbReference type="PDB" id="4V9C">
    <property type="method" value="X-ray"/>
    <property type="resolution" value="3.30 A"/>
    <property type="chains" value="AE/CE=1-167"/>
</dbReference>
<dbReference type="PDB" id="4V9D">
    <property type="method" value="X-ray"/>
    <property type="resolution" value="3.00 A"/>
    <property type="chains" value="AE/BE=10-159"/>
</dbReference>
<dbReference type="PDB" id="4V9O">
    <property type="method" value="X-ray"/>
    <property type="resolution" value="2.90 A"/>
    <property type="chains" value="BE/DE/FE/HE=1-167"/>
</dbReference>
<dbReference type="PDB" id="4V9P">
    <property type="method" value="X-ray"/>
    <property type="resolution" value="2.90 A"/>
    <property type="chains" value="BE/DE/FE/HE=1-167"/>
</dbReference>
<dbReference type="PDB" id="4WF1">
    <property type="method" value="X-ray"/>
    <property type="resolution" value="3.09 A"/>
    <property type="chains" value="AE/CE=10-159"/>
</dbReference>
<dbReference type="PDB" id="4WOI">
    <property type="method" value="X-ray"/>
    <property type="resolution" value="3.00 A"/>
    <property type="chains" value="AE/DE=1-167"/>
</dbReference>
<dbReference type="PDB" id="4WWW">
    <property type="method" value="X-ray"/>
    <property type="resolution" value="3.10 A"/>
    <property type="chains" value="QE/XE=10-159"/>
</dbReference>
<dbReference type="PDB" id="4YBB">
    <property type="method" value="X-ray"/>
    <property type="resolution" value="2.10 A"/>
    <property type="chains" value="AE/BE=10-164"/>
</dbReference>
<dbReference type="PDB" id="5AFI">
    <property type="method" value="EM"/>
    <property type="resolution" value="2.90 A"/>
    <property type="chains" value="e=1-167"/>
</dbReference>
<dbReference type="PDB" id="5H5U">
    <property type="method" value="EM"/>
    <property type="resolution" value="3.00 A"/>
    <property type="chains" value="l=2-167"/>
</dbReference>
<dbReference type="PDB" id="5IQR">
    <property type="method" value="EM"/>
    <property type="resolution" value="3.00 A"/>
    <property type="chains" value="j=1-167"/>
</dbReference>
<dbReference type="PDB" id="5IT8">
    <property type="method" value="X-ray"/>
    <property type="resolution" value="3.12 A"/>
    <property type="chains" value="AE/BE=10-164"/>
</dbReference>
<dbReference type="PDB" id="5J5B">
    <property type="method" value="X-ray"/>
    <property type="resolution" value="2.80 A"/>
    <property type="chains" value="AE/BE=10-164"/>
</dbReference>
<dbReference type="PDB" id="5J7L">
    <property type="method" value="X-ray"/>
    <property type="resolution" value="3.00 A"/>
    <property type="chains" value="AE/BE=10-164"/>
</dbReference>
<dbReference type="PDB" id="5J88">
    <property type="method" value="X-ray"/>
    <property type="resolution" value="3.32 A"/>
    <property type="chains" value="AE/BE=10-164"/>
</dbReference>
<dbReference type="PDB" id="5J8A">
    <property type="method" value="X-ray"/>
    <property type="resolution" value="3.10 A"/>
    <property type="chains" value="AE/BE=10-164"/>
</dbReference>
<dbReference type="PDB" id="5J91">
    <property type="method" value="X-ray"/>
    <property type="resolution" value="2.96 A"/>
    <property type="chains" value="AE/BE=10-164"/>
</dbReference>
<dbReference type="PDB" id="5JC9">
    <property type="method" value="X-ray"/>
    <property type="resolution" value="3.03 A"/>
    <property type="chains" value="AE/BE=10-164"/>
</dbReference>
<dbReference type="PDB" id="5JTE">
    <property type="method" value="EM"/>
    <property type="resolution" value="3.60 A"/>
    <property type="chains" value="AE=1-167"/>
</dbReference>
<dbReference type="PDB" id="5JU8">
    <property type="method" value="EM"/>
    <property type="resolution" value="3.60 A"/>
    <property type="chains" value="AE=1-167"/>
</dbReference>
<dbReference type="PDB" id="5KCR">
    <property type="method" value="EM"/>
    <property type="resolution" value="3.60 A"/>
    <property type="chains" value="1e=1-167"/>
</dbReference>
<dbReference type="PDB" id="5KCS">
    <property type="method" value="EM"/>
    <property type="resolution" value="3.90 A"/>
    <property type="chains" value="1e=1-167"/>
</dbReference>
<dbReference type="PDB" id="5KPS">
    <property type="method" value="EM"/>
    <property type="resolution" value="3.90 A"/>
    <property type="chains" value="10=1-167"/>
</dbReference>
<dbReference type="PDB" id="5KPV">
    <property type="method" value="EM"/>
    <property type="resolution" value="4.10 A"/>
    <property type="chains" value="9=1-167"/>
</dbReference>
<dbReference type="PDB" id="5KPW">
    <property type="method" value="EM"/>
    <property type="resolution" value="3.90 A"/>
    <property type="chains" value="9=1-167"/>
</dbReference>
<dbReference type="PDB" id="5KPX">
    <property type="method" value="EM"/>
    <property type="resolution" value="3.90 A"/>
    <property type="chains" value="9=1-167"/>
</dbReference>
<dbReference type="PDB" id="5L3P">
    <property type="method" value="EM"/>
    <property type="resolution" value="3.70 A"/>
    <property type="chains" value="e=1-167"/>
</dbReference>
<dbReference type="PDB" id="5LZA">
    <property type="method" value="EM"/>
    <property type="resolution" value="3.60 A"/>
    <property type="chains" value="e=10-166"/>
</dbReference>
<dbReference type="PDB" id="5LZB">
    <property type="method" value="EM"/>
    <property type="resolution" value="5.30 A"/>
    <property type="chains" value="e=10-166"/>
</dbReference>
<dbReference type="PDB" id="5LZC">
    <property type="method" value="EM"/>
    <property type="resolution" value="4.80 A"/>
    <property type="chains" value="e=10-166"/>
</dbReference>
<dbReference type="PDB" id="5LZD">
    <property type="method" value="EM"/>
    <property type="resolution" value="3.40 A"/>
    <property type="chains" value="e=10-166"/>
</dbReference>
<dbReference type="PDB" id="5LZE">
    <property type="method" value="EM"/>
    <property type="resolution" value="3.50 A"/>
    <property type="chains" value="e=10-166"/>
</dbReference>
<dbReference type="PDB" id="5LZF">
    <property type="method" value="EM"/>
    <property type="resolution" value="4.60 A"/>
    <property type="chains" value="e=10-166"/>
</dbReference>
<dbReference type="PDB" id="5MDV">
    <property type="method" value="EM"/>
    <property type="resolution" value="2.97 A"/>
    <property type="chains" value="j=1-167"/>
</dbReference>
<dbReference type="PDB" id="5MDW">
    <property type="method" value="EM"/>
    <property type="resolution" value="3.06 A"/>
    <property type="chains" value="j=1-167"/>
</dbReference>
<dbReference type="PDB" id="5MDY">
    <property type="method" value="EM"/>
    <property type="resolution" value="3.35 A"/>
    <property type="chains" value="j=1-167"/>
</dbReference>
<dbReference type="PDB" id="5MDZ">
    <property type="method" value="EM"/>
    <property type="resolution" value="3.10 A"/>
    <property type="chains" value="j=1-167"/>
</dbReference>
<dbReference type="PDB" id="5ME0">
    <property type="method" value="EM"/>
    <property type="resolution" value="13.50 A"/>
    <property type="chains" value="E=1-167"/>
</dbReference>
<dbReference type="PDB" id="5ME1">
    <property type="method" value="EM"/>
    <property type="resolution" value="13.50 A"/>
    <property type="chains" value="E=1-167"/>
</dbReference>
<dbReference type="PDB" id="5MGP">
    <property type="method" value="EM"/>
    <property type="resolution" value="3.10 A"/>
    <property type="chains" value="e=10-166"/>
</dbReference>
<dbReference type="PDB" id="5MY1">
    <property type="method" value="EM"/>
    <property type="resolution" value="7.60 A"/>
    <property type="chains" value="E=2-167"/>
</dbReference>
<dbReference type="PDB" id="5NO2">
    <property type="method" value="EM"/>
    <property type="resolution" value="5.16 A"/>
    <property type="chains" value="E=10-164"/>
</dbReference>
<dbReference type="PDB" id="5NO3">
    <property type="method" value="EM"/>
    <property type="resolution" value="5.16 A"/>
    <property type="chains" value="E=10-164"/>
</dbReference>
<dbReference type="PDB" id="5NO4">
    <property type="method" value="EM"/>
    <property type="resolution" value="5.16 A"/>
    <property type="chains" value="E=10-164"/>
</dbReference>
<dbReference type="PDB" id="5NP6">
    <property type="method" value="EM"/>
    <property type="resolution" value="3.60 A"/>
    <property type="chains" value="H=10-166"/>
</dbReference>
<dbReference type="PDB" id="5NWY">
    <property type="method" value="EM"/>
    <property type="resolution" value="2.93 A"/>
    <property type="chains" value="4=1-166"/>
</dbReference>
<dbReference type="PDB" id="5O2R">
    <property type="method" value="EM"/>
    <property type="resolution" value="3.40 A"/>
    <property type="chains" value="e=10-166"/>
</dbReference>
<dbReference type="PDB" id="5U4I">
    <property type="method" value="EM"/>
    <property type="resolution" value="3.50 A"/>
    <property type="chains" value="e=1-167"/>
</dbReference>
<dbReference type="PDB" id="5U4J">
    <property type="method" value="EM"/>
    <property type="resolution" value="3.70 A"/>
    <property type="chains" value="e=1-167"/>
</dbReference>
<dbReference type="PDB" id="5U9F">
    <property type="method" value="EM"/>
    <property type="resolution" value="3.20 A"/>
    <property type="chains" value="E=1-167"/>
</dbReference>
<dbReference type="PDB" id="5U9G">
    <property type="method" value="EM"/>
    <property type="resolution" value="3.20 A"/>
    <property type="chains" value="E=1-167"/>
</dbReference>
<dbReference type="PDB" id="5UYK">
    <property type="method" value="EM"/>
    <property type="resolution" value="3.90 A"/>
    <property type="chains" value="E=10-166"/>
</dbReference>
<dbReference type="PDB" id="5UYL">
    <property type="method" value="EM"/>
    <property type="resolution" value="3.60 A"/>
    <property type="chains" value="E=10-166"/>
</dbReference>
<dbReference type="PDB" id="5UYM">
    <property type="method" value="EM"/>
    <property type="resolution" value="3.20 A"/>
    <property type="chains" value="E=10-166"/>
</dbReference>
<dbReference type="PDB" id="5UYN">
    <property type="method" value="EM"/>
    <property type="resolution" value="4.00 A"/>
    <property type="chains" value="E=10-166"/>
</dbReference>
<dbReference type="PDB" id="5UYP">
    <property type="method" value="EM"/>
    <property type="resolution" value="3.90 A"/>
    <property type="chains" value="E=10-166"/>
</dbReference>
<dbReference type="PDB" id="5UYQ">
    <property type="method" value="EM"/>
    <property type="resolution" value="3.80 A"/>
    <property type="chains" value="E=10-166"/>
</dbReference>
<dbReference type="PDB" id="5UZ4">
    <property type="method" value="EM"/>
    <property type="resolution" value="5.80 A"/>
    <property type="chains" value="E=1-167"/>
</dbReference>
<dbReference type="PDB" id="5WDT">
    <property type="method" value="EM"/>
    <property type="resolution" value="3.00 A"/>
    <property type="chains" value="e=10-166"/>
</dbReference>
<dbReference type="PDB" id="5WE4">
    <property type="method" value="EM"/>
    <property type="resolution" value="3.10 A"/>
    <property type="chains" value="e=10-166"/>
</dbReference>
<dbReference type="PDB" id="5WE6">
    <property type="method" value="EM"/>
    <property type="resolution" value="3.40 A"/>
    <property type="chains" value="e=10-166"/>
</dbReference>
<dbReference type="PDB" id="5WF0">
    <property type="method" value="EM"/>
    <property type="resolution" value="3.60 A"/>
    <property type="chains" value="e=10-166"/>
</dbReference>
<dbReference type="PDB" id="5WFK">
    <property type="method" value="EM"/>
    <property type="resolution" value="3.40 A"/>
    <property type="chains" value="e=10-166"/>
</dbReference>
<dbReference type="PDB" id="5WFS">
    <property type="method" value="EM"/>
    <property type="resolution" value="3.00 A"/>
    <property type="chains" value="e=10-166"/>
</dbReference>
<dbReference type="PDB" id="6AWB">
    <property type="method" value="EM"/>
    <property type="resolution" value="6.70 A"/>
    <property type="chains" value="H=10-166"/>
</dbReference>
<dbReference type="PDB" id="6AWC">
    <property type="method" value="EM"/>
    <property type="resolution" value="7.90 A"/>
    <property type="chains" value="H=10-166"/>
</dbReference>
<dbReference type="PDB" id="6AWD">
    <property type="method" value="EM"/>
    <property type="resolution" value="8.10 A"/>
    <property type="chains" value="H=10-166"/>
</dbReference>
<dbReference type="PDB" id="6BU8">
    <property type="method" value="EM"/>
    <property type="resolution" value="3.50 A"/>
    <property type="chains" value="E=10-166"/>
</dbReference>
<dbReference type="PDB" id="6BY1">
    <property type="method" value="X-ray"/>
    <property type="resolution" value="3.94 A"/>
    <property type="chains" value="AE/BE=10-159"/>
</dbReference>
<dbReference type="PDB" id="6C4I">
    <property type="method" value="EM"/>
    <property type="resolution" value="3.24 A"/>
    <property type="chains" value="e=1-167"/>
</dbReference>
<dbReference type="PDB" id="6DNC">
    <property type="method" value="EM"/>
    <property type="resolution" value="3.70 A"/>
    <property type="chains" value="RA=1-167"/>
</dbReference>
<dbReference type="PDB" id="6ENF">
    <property type="method" value="EM"/>
    <property type="resolution" value="3.20 A"/>
    <property type="chains" value="e=10-166"/>
</dbReference>
<dbReference type="PDB" id="6ENJ">
    <property type="method" value="EM"/>
    <property type="resolution" value="3.70 A"/>
    <property type="chains" value="e=10-166"/>
</dbReference>
<dbReference type="PDB" id="6ENU">
    <property type="method" value="EM"/>
    <property type="resolution" value="3.10 A"/>
    <property type="chains" value="e=10-166"/>
</dbReference>
<dbReference type="PDB" id="6GWT">
    <property type="method" value="EM"/>
    <property type="resolution" value="3.80 A"/>
    <property type="chains" value="e=10-166"/>
</dbReference>
<dbReference type="PDB" id="6GXM">
    <property type="method" value="EM"/>
    <property type="resolution" value="3.80 A"/>
    <property type="chains" value="e=10-166"/>
</dbReference>
<dbReference type="PDB" id="6GXN">
    <property type="method" value="EM"/>
    <property type="resolution" value="3.90 A"/>
    <property type="chains" value="e=10-166"/>
</dbReference>
<dbReference type="PDB" id="6GXO">
    <property type="method" value="EM"/>
    <property type="resolution" value="3.90 A"/>
    <property type="chains" value="e=10-166"/>
</dbReference>
<dbReference type="PDB" id="6GXP">
    <property type="method" value="EM"/>
    <property type="resolution" value="4.40 A"/>
    <property type="chains" value="e=10-166"/>
</dbReference>
<dbReference type="PDB" id="6H4N">
    <property type="method" value="EM"/>
    <property type="resolution" value="3.00 A"/>
    <property type="chains" value="e=10-166"/>
</dbReference>
<dbReference type="PDB" id="6H58">
    <property type="method" value="EM"/>
    <property type="resolution" value="7.90 A"/>
    <property type="chains" value="e/ee=10-166"/>
</dbReference>
<dbReference type="PDB" id="6HRM">
    <property type="method" value="EM"/>
    <property type="resolution" value="2.96 A"/>
    <property type="chains" value="j=10-165"/>
</dbReference>
<dbReference type="PDB" id="6I7V">
    <property type="method" value="X-ray"/>
    <property type="resolution" value="2.90 A"/>
    <property type="chains" value="AE/BE=10-159"/>
</dbReference>
<dbReference type="PDB" id="6NQB">
    <property type="method" value="EM"/>
    <property type="resolution" value="3.80 A"/>
    <property type="chains" value="E=10-158"/>
</dbReference>
<dbReference type="PDB" id="6O7K">
    <property type="method" value="EM"/>
    <property type="resolution" value="4.20 A"/>
    <property type="chains" value="k=10-159"/>
</dbReference>
<dbReference type="PDB" id="6O9J">
    <property type="method" value="EM"/>
    <property type="resolution" value="3.90 A"/>
    <property type="chains" value="e=10-159"/>
</dbReference>
<dbReference type="PDB" id="6O9K">
    <property type="method" value="EM"/>
    <property type="resolution" value="4.00 A"/>
    <property type="chains" value="e=10-159"/>
</dbReference>
<dbReference type="PDB" id="6OFX">
    <property type="method" value="EM"/>
    <property type="resolution" value="3.30 A"/>
    <property type="chains" value="J=10-166"/>
</dbReference>
<dbReference type="PDB" id="6OG7">
    <property type="method" value="EM"/>
    <property type="resolution" value="3.30 A"/>
    <property type="chains" value="J=10-166"/>
</dbReference>
<dbReference type="PDB" id="6OGF">
    <property type="method" value="EM"/>
    <property type="resolution" value="3.90 A"/>
    <property type="chains" value="J=1-167"/>
</dbReference>
<dbReference type="PDB" id="6OGG">
    <property type="method" value="EM"/>
    <property type="resolution" value="4.20 A"/>
    <property type="chains" value="J=1-167"/>
</dbReference>
<dbReference type="PDB" id="6OGI">
    <property type="method" value="EM"/>
    <property type="resolution" value="3.40 A"/>
    <property type="chains" value="J=1-167"/>
</dbReference>
<dbReference type="PDB" id="6OM6">
    <property type="method" value="EM"/>
    <property type="resolution" value="3.10 A"/>
    <property type="chains" value="j=1-167"/>
</dbReference>
<dbReference type="PDB" id="6ORE">
    <property type="method" value="EM"/>
    <property type="resolution" value="2.90 A"/>
    <property type="chains" value="j=10-165"/>
</dbReference>
<dbReference type="PDB" id="6ORL">
    <property type="method" value="EM"/>
    <property type="resolution" value="3.50 A"/>
    <property type="chains" value="j=10-165"/>
</dbReference>
<dbReference type="PDB" id="6OSK">
    <property type="method" value="EM"/>
    <property type="resolution" value="3.60 A"/>
    <property type="chains" value="j=10-165"/>
</dbReference>
<dbReference type="PDB" id="6OSQ">
    <property type="method" value="EM"/>
    <property type="resolution" value="3.50 A"/>
    <property type="chains" value="j=10-165"/>
</dbReference>
<dbReference type="PDB" id="6OST">
    <property type="method" value="EM"/>
    <property type="resolution" value="4.20 A"/>
    <property type="chains" value="j=10-165"/>
</dbReference>
<dbReference type="PDB" id="6OT3">
    <property type="method" value="EM"/>
    <property type="resolution" value="3.90 A"/>
    <property type="chains" value="j=10-165"/>
</dbReference>
<dbReference type="PDB" id="6OUO">
    <property type="method" value="EM"/>
    <property type="resolution" value="3.70 A"/>
    <property type="chains" value="j=10-165"/>
</dbReference>
<dbReference type="PDB" id="6Q97">
    <property type="method" value="EM"/>
    <property type="resolution" value="3.90 A"/>
    <property type="chains" value="j=10-165"/>
</dbReference>
<dbReference type="PDB" id="6Q98">
    <property type="method" value="EM"/>
    <property type="resolution" value="4.30 A"/>
    <property type="chains" value="j=1-167"/>
</dbReference>
<dbReference type="PDB" id="6Q9A">
    <property type="method" value="EM"/>
    <property type="resolution" value="3.70 A"/>
    <property type="chains" value="j=10-165"/>
</dbReference>
<dbReference type="PDB" id="6SZS">
    <property type="method" value="EM"/>
    <property type="resolution" value="3.06 A"/>
    <property type="chains" value="e=1-167"/>
</dbReference>
<dbReference type="PDB" id="6TBV">
    <property type="method" value="EM"/>
    <property type="resolution" value="2.70 A"/>
    <property type="chains" value="S051=1-167"/>
</dbReference>
<dbReference type="PDB" id="6TC3">
    <property type="method" value="EM"/>
    <property type="resolution" value="2.70 A"/>
    <property type="chains" value="S051=1-167"/>
</dbReference>
<dbReference type="PDB" id="6VU3">
    <property type="method" value="EM"/>
    <property type="resolution" value="3.70 A"/>
    <property type="chains" value="K=10-165"/>
</dbReference>
<dbReference type="PDB" id="6VWL">
    <property type="method" value="EM"/>
    <property type="resolution" value="3.10 A"/>
    <property type="chains" value="d=1-167"/>
</dbReference>
<dbReference type="PDB" id="6VWM">
    <property type="method" value="EM"/>
    <property type="resolution" value="3.40 A"/>
    <property type="chains" value="d=1-167"/>
</dbReference>
<dbReference type="PDB" id="6VWN">
    <property type="method" value="EM"/>
    <property type="resolution" value="3.40 A"/>
    <property type="chains" value="d=1-167"/>
</dbReference>
<dbReference type="PDB" id="6VYQ">
    <property type="method" value="EM"/>
    <property type="resolution" value="3.70 A"/>
    <property type="chains" value="K=1-167"/>
</dbReference>
<dbReference type="PDB" id="6VYR">
    <property type="method" value="EM"/>
    <property type="resolution" value="3.80 A"/>
    <property type="chains" value="K=1-167"/>
</dbReference>
<dbReference type="PDB" id="6VYS">
    <property type="method" value="EM"/>
    <property type="resolution" value="3.70 A"/>
    <property type="chains" value="K=1-167"/>
</dbReference>
<dbReference type="PDB" id="6VYT">
    <property type="method" value="EM"/>
    <property type="resolution" value="14.00 A"/>
    <property type="chains" value="K=1-167"/>
</dbReference>
<dbReference type="PDB" id="6VYU">
    <property type="method" value="EM"/>
    <property type="resolution" value="7.00 A"/>
    <property type="chains" value="K=1-167"/>
</dbReference>
<dbReference type="PDB" id="6VYW">
    <property type="method" value="EM"/>
    <property type="resolution" value="7.00 A"/>
    <property type="chains" value="K=1-167"/>
</dbReference>
<dbReference type="PDB" id="6VYX">
    <property type="method" value="EM"/>
    <property type="resolution" value="9.90 A"/>
    <property type="chains" value="K=1-167"/>
</dbReference>
<dbReference type="PDB" id="6VYY">
    <property type="method" value="EM"/>
    <property type="resolution" value="9.90 A"/>
    <property type="chains" value="K=1-167"/>
</dbReference>
<dbReference type="PDB" id="6VYZ">
    <property type="method" value="EM"/>
    <property type="resolution" value="9.90 A"/>
    <property type="chains" value="K=1-167"/>
</dbReference>
<dbReference type="PDB" id="6VZ2">
    <property type="method" value="EM"/>
    <property type="resolution" value="10.00 A"/>
    <property type="chains" value="K=1-167"/>
</dbReference>
<dbReference type="PDB" id="6VZ3">
    <property type="method" value="EM"/>
    <property type="resolution" value="8.90 A"/>
    <property type="chains" value="K=10-165"/>
</dbReference>
<dbReference type="PDB" id="6VZ5">
    <property type="method" value="EM"/>
    <property type="resolution" value="8.90 A"/>
    <property type="chains" value="K=1-167"/>
</dbReference>
<dbReference type="PDB" id="6VZ7">
    <property type="method" value="EM"/>
    <property type="resolution" value="7.00 A"/>
    <property type="chains" value="K=10-165"/>
</dbReference>
<dbReference type="PDB" id="6VZJ">
    <property type="method" value="EM"/>
    <property type="resolution" value="4.10 A"/>
    <property type="chains" value="K=1-167"/>
</dbReference>
<dbReference type="PDB" id="6W6K">
    <property type="method" value="EM"/>
    <property type="resolution" value="3.60 A"/>
    <property type="chains" value="E=1-167"/>
</dbReference>
<dbReference type="PDB" id="6W77">
    <property type="method" value="EM"/>
    <property type="resolution" value="3.60 A"/>
    <property type="chains" value="E=1-167"/>
</dbReference>
<dbReference type="PDB" id="6W7M">
    <property type="method" value="EM"/>
    <property type="resolution" value="3.80 A"/>
    <property type="chains" value="E=1-167"/>
</dbReference>
<dbReference type="PDB" id="6W7N">
    <property type="method" value="EM"/>
    <property type="resolution" value="3.40 A"/>
    <property type="chains" value="E=1-167"/>
</dbReference>
<dbReference type="PDB" id="6W7W">
    <property type="method" value="EM"/>
    <property type="resolution" value="3.90 A"/>
    <property type="chains" value="D=1-167"/>
</dbReference>
<dbReference type="PDB" id="6WD0">
    <property type="method" value="EM"/>
    <property type="resolution" value="3.00 A"/>
    <property type="chains" value="J=10-166"/>
</dbReference>
<dbReference type="PDB" id="6WD1">
    <property type="method" value="EM"/>
    <property type="resolution" value="3.30 A"/>
    <property type="chains" value="J=10-166"/>
</dbReference>
<dbReference type="PDB" id="6WD2">
    <property type="method" value="EM"/>
    <property type="resolution" value="3.60 A"/>
    <property type="chains" value="J=10-166"/>
</dbReference>
<dbReference type="PDB" id="6WD3">
    <property type="method" value="EM"/>
    <property type="resolution" value="3.60 A"/>
    <property type="chains" value="J=10-166"/>
</dbReference>
<dbReference type="PDB" id="6WD4">
    <property type="method" value="EM"/>
    <property type="resolution" value="3.70 A"/>
    <property type="chains" value="J=10-166"/>
</dbReference>
<dbReference type="PDB" id="6WD5">
    <property type="method" value="EM"/>
    <property type="resolution" value="3.60 A"/>
    <property type="chains" value="J=10-166"/>
</dbReference>
<dbReference type="PDB" id="6WD6">
    <property type="method" value="EM"/>
    <property type="resolution" value="3.70 A"/>
    <property type="chains" value="J=10-166"/>
</dbReference>
<dbReference type="PDB" id="6WD7">
    <property type="method" value="EM"/>
    <property type="resolution" value="3.90 A"/>
    <property type="chains" value="J=10-166"/>
</dbReference>
<dbReference type="PDB" id="6WD8">
    <property type="method" value="EM"/>
    <property type="resolution" value="3.70 A"/>
    <property type="chains" value="J=10-166"/>
</dbReference>
<dbReference type="PDB" id="6WD9">
    <property type="method" value="EM"/>
    <property type="resolution" value="3.70 A"/>
    <property type="chains" value="J=10-166"/>
</dbReference>
<dbReference type="PDB" id="6WDA">
    <property type="method" value="EM"/>
    <property type="resolution" value="3.80 A"/>
    <property type="chains" value="J=10-166"/>
</dbReference>
<dbReference type="PDB" id="6WDB">
    <property type="method" value="EM"/>
    <property type="resolution" value="4.00 A"/>
    <property type="chains" value="J=10-166"/>
</dbReference>
<dbReference type="PDB" id="6WDC">
    <property type="method" value="EM"/>
    <property type="resolution" value="4.20 A"/>
    <property type="chains" value="J=10-166"/>
</dbReference>
<dbReference type="PDB" id="6WDD">
    <property type="method" value="EM"/>
    <property type="resolution" value="3.20 A"/>
    <property type="chains" value="J=10-166"/>
</dbReference>
<dbReference type="PDB" id="6WDE">
    <property type="method" value="EM"/>
    <property type="resolution" value="3.00 A"/>
    <property type="chains" value="J=10-166"/>
</dbReference>
<dbReference type="PDB" id="6WDF">
    <property type="method" value="EM"/>
    <property type="resolution" value="3.30 A"/>
    <property type="chains" value="J=10-166"/>
</dbReference>
<dbReference type="PDB" id="6WDG">
    <property type="method" value="EM"/>
    <property type="resolution" value="3.30 A"/>
    <property type="chains" value="J=10-166"/>
</dbReference>
<dbReference type="PDB" id="6WDH">
    <property type="method" value="EM"/>
    <property type="resolution" value="4.30 A"/>
    <property type="chains" value="J=10-166"/>
</dbReference>
<dbReference type="PDB" id="6WDI">
    <property type="method" value="EM"/>
    <property type="resolution" value="4.00 A"/>
    <property type="chains" value="J=10-166"/>
</dbReference>
<dbReference type="PDB" id="6WDJ">
    <property type="method" value="EM"/>
    <property type="resolution" value="3.70 A"/>
    <property type="chains" value="J=10-166"/>
</dbReference>
<dbReference type="PDB" id="6WDK">
    <property type="method" value="EM"/>
    <property type="resolution" value="3.60 A"/>
    <property type="chains" value="J=10-166"/>
</dbReference>
<dbReference type="PDB" id="6WDL">
    <property type="method" value="EM"/>
    <property type="resolution" value="3.70 A"/>
    <property type="chains" value="J=10-166"/>
</dbReference>
<dbReference type="PDB" id="6WDM">
    <property type="method" value="EM"/>
    <property type="resolution" value="3.60 A"/>
    <property type="chains" value="J=10-166"/>
</dbReference>
<dbReference type="PDB" id="6WNV">
    <property type="method" value="EM"/>
    <property type="resolution" value="3.50 A"/>
    <property type="chains" value="J=10-166"/>
</dbReference>
<dbReference type="PDB" id="6WNW">
    <property type="method" value="EM"/>
    <property type="resolution" value="3.20 A"/>
    <property type="chains" value="J=10-166"/>
</dbReference>
<dbReference type="PDB" id="6X6T">
    <property type="method" value="EM"/>
    <property type="resolution" value="3.20 A"/>
    <property type="chains" value="K=1-167"/>
</dbReference>
<dbReference type="PDB" id="6X7F">
    <property type="method" value="EM"/>
    <property type="resolution" value="3.50 A"/>
    <property type="chains" value="K=1-167"/>
</dbReference>
<dbReference type="PDB" id="6X7K">
    <property type="method" value="EM"/>
    <property type="resolution" value="3.10 A"/>
    <property type="chains" value="K=1-167"/>
</dbReference>
<dbReference type="PDB" id="6X9Q">
    <property type="method" value="EM"/>
    <property type="resolution" value="4.80 A"/>
    <property type="chains" value="K=1-167"/>
</dbReference>
<dbReference type="PDB" id="6XDQ">
    <property type="method" value="EM"/>
    <property type="resolution" value="3.70 A"/>
    <property type="chains" value="K=1-167"/>
</dbReference>
<dbReference type="PDB" id="6XDR">
    <property type="method" value="EM"/>
    <property type="resolution" value="4.70 A"/>
    <property type="chains" value="K=1-167"/>
</dbReference>
<dbReference type="PDB" id="6XE0">
    <property type="method" value="EM"/>
    <property type="resolution" value="6.80 A"/>
    <property type="chains" value="D=10-159"/>
</dbReference>
<dbReference type="PDB" id="6XGF">
    <property type="method" value="EM"/>
    <property type="resolution" value="5.00 A"/>
    <property type="chains" value="K=1-167"/>
</dbReference>
<dbReference type="PDB" id="6XII">
    <property type="method" value="EM"/>
    <property type="resolution" value="7.00 A"/>
    <property type="chains" value="K=1-167"/>
</dbReference>
<dbReference type="PDB" id="6XIJ">
    <property type="method" value="EM"/>
    <property type="resolution" value="8.00 A"/>
    <property type="chains" value="K=1-167"/>
</dbReference>
<dbReference type="PDB" id="6XZA">
    <property type="method" value="EM"/>
    <property type="resolution" value="2.66 A"/>
    <property type="chains" value="E1=10-164"/>
</dbReference>
<dbReference type="PDB" id="6XZB">
    <property type="method" value="EM"/>
    <property type="resolution" value="2.54 A"/>
    <property type="chains" value="E1=10-164"/>
</dbReference>
<dbReference type="PDB" id="6Y69">
    <property type="method" value="EM"/>
    <property type="resolution" value="2.86 A"/>
    <property type="chains" value="e=10-166"/>
</dbReference>
<dbReference type="PDB" id="6ZTJ">
    <property type="method" value="EM"/>
    <property type="resolution" value="3.40 A"/>
    <property type="chains" value="AE=1-167"/>
</dbReference>
<dbReference type="PDB" id="6ZTL">
    <property type="method" value="EM"/>
    <property type="resolution" value="3.50 A"/>
    <property type="chains" value="AE=1-167"/>
</dbReference>
<dbReference type="PDB" id="6ZTM">
    <property type="method" value="EM"/>
    <property type="resolution" value="3.30 A"/>
    <property type="chains" value="AE=1-167"/>
</dbReference>
<dbReference type="PDB" id="6ZTN">
    <property type="method" value="EM"/>
    <property type="resolution" value="3.90 A"/>
    <property type="chains" value="AE=1-167"/>
</dbReference>
<dbReference type="PDB" id="6ZTO">
    <property type="method" value="EM"/>
    <property type="resolution" value="3.00 A"/>
    <property type="chains" value="AE=1-167"/>
</dbReference>
<dbReference type="PDB" id="6ZTP">
    <property type="method" value="EM"/>
    <property type="resolution" value="3.00 A"/>
    <property type="chains" value="AE=1-167"/>
</dbReference>
<dbReference type="PDB" id="6ZU1">
    <property type="method" value="EM"/>
    <property type="resolution" value="3.00 A"/>
    <property type="chains" value="AE=1-167"/>
</dbReference>
<dbReference type="PDB" id="7ABZ">
    <property type="method" value="EM"/>
    <property type="resolution" value="3.21 A"/>
    <property type="chains" value="j=1-167"/>
</dbReference>
<dbReference type="PDB" id="7AC7">
    <property type="method" value="EM"/>
    <property type="resolution" value="3.08 A"/>
    <property type="chains" value="j=10-165"/>
</dbReference>
<dbReference type="PDB" id="7ACJ">
    <property type="method" value="EM"/>
    <property type="resolution" value="3.20 A"/>
    <property type="chains" value="j=10-165"/>
</dbReference>
<dbReference type="PDB" id="7ACR">
    <property type="method" value="EM"/>
    <property type="resolution" value="3.44 A"/>
    <property type="chains" value="j=10-165"/>
</dbReference>
<dbReference type="PDB" id="7AFI">
    <property type="method" value="EM"/>
    <property type="resolution" value="3.53 A"/>
    <property type="chains" value="E=1-167"/>
</dbReference>
<dbReference type="PDB" id="7AFL">
    <property type="method" value="EM"/>
    <property type="resolution" value="4.20 A"/>
    <property type="chains" value="E=1-167"/>
</dbReference>
<dbReference type="PDB" id="7AFO">
    <property type="method" value="EM"/>
    <property type="resolution" value="3.93 A"/>
    <property type="chains" value="E=1-167"/>
</dbReference>
<dbReference type="PDB" id="7B5K">
    <property type="method" value="EM"/>
    <property type="resolution" value="2.90 A"/>
    <property type="chains" value="e=10-164"/>
</dbReference>
<dbReference type="PDB" id="7BOD">
    <property type="method" value="EM"/>
    <property type="resolution" value="2.88 A"/>
    <property type="chains" value="E=1-167"/>
</dbReference>
<dbReference type="PDB" id="7BOE">
    <property type="method" value="EM"/>
    <property type="resolution" value="2.90 A"/>
    <property type="chains" value="E=1-167"/>
</dbReference>
<dbReference type="PDB" id="7BOF">
    <property type="method" value="EM"/>
    <property type="resolution" value="2.92 A"/>
    <property type="chains" value="E=1-167"/>
</dbReference>
<dbReference type="PDB" id="7BOG">
    <property type="method" value="EM"/>
    <property type="resolution" value="2.75 A"/>
    <property type="chains" value="E=1-167"/>
</dbReference>
<dbReference type="PDB" id="7BOH">
    <property type="method" value="EM"/>
    <property type="resolution" value="2.82 A"/>
    <property type="chains" value="E=1-167"/>
</dbReference>
<dbReference type="PDB" id="7BOI">
    <property type="method" value="EM"/>
    <property type="resolution" value="2.98 A"/>
    <property type="chains" value="E=1-167"/>
</dbReference>
<dbReference type="PDB" id="7D6Z">
    <property type="method" value="EM"/>
    <property type="resolution" value="3.40 A"/>
    <property type="chains" value="l=1-167"/>
</dbReference>
<dbReference type="PDB" id="7D80">
    <property type="method" value="EM"/>
    <property type="resolution" value="4.10 A"/>
    <property type="chains" value="F=1-167"/>
</dbReference>
<dbReference type="PDB" id="7JSS">
    <property type="method" value="EM"/>
    <property type="resolution" value="3.70 A"/>
    <property type="chains" value="J=10-166"/>
</dbReference>
<dbReference type="PDB" id="7JSW">
    <property type="method" value="EM"/>
    <property type="resolution" value="3.80 A"/>
    <property type="chains" value="J=10-166"/>
</dbReference>
<dbReference type="PDB" id="7JSZ">
    <property type="method" value="EM"/>
    <property type="resolution" value="3.70 A"/>
    <property type="chains" value="J=10-166"/>
</dbReference>
<dbReference type="PDB" id="7JT1">
    <property type="method" value="EM"/>
    <property type="resolution" value="3.30 A"/>
    <property type="chains" value="J=10-166"/>
</dbReference>
<dbReference type="PDB" id="7JT2">
    <property type="method" value="EM"/>
    <property type="resolution" value="3.50 A"/>
    <property type="chains" value="J=10-166"/>
</dbReference>
<dbReference type="PDB" id="7JT3">
    <property type="method" value="EM"/>
    <property type="resolution" value="3.70 A"/>
    <property type="chains" value="J=10-166"/>
</dbReference>
<dbReference type="PDB" id="7K00">
    <property type="method" value="EM"/>
    <property type="resolution" value="1.98 A"/>
    <property type="chains" value="E=1-167"/>
</dbReference>
<dbReference type="PDB" id="7K50">
    <property type="method" value="EM"/>
    <property type="resolution" value="3.40 A"/>
    <property type="chains" value="J=10-166"/>
</dbReference>
<dbReference type="PDB" id="7K51">
    <property type="method" value="EM"/>
    <property type="resolution" value="3.50 A"/>
    <property type="chains" value="J=10-166"/>
</dbReference>
<dbReference type="PDB" id="7K52">
    <property type="method" value="EM"/>
    <property type="resolution" value="3.40 A"/>
    <property type="chains" value="J=10-166"/>
</dbReference>
<dbReference type="PDB" id="7K53">
    <property type="method" value="EM"/>
    <property type="resolution" value="3.20 A"/>
    <property type="chains" value="J=10-166"/>
</dbReference>
<dbReference type="PDB" id="7K54">
    <property type="method" value="EM"/>
    <property type="resolution" value="3.20 A"/>
    <property type="chains" value="J=10-166"/>
</dbReference>
<dbReference type="PDB" id="7K55">
    <property type="method" value="EM"/>
    <property type="resolution" value="3.30 A"/>
    <property type="chains" value="J=10-166"/>
</dbReference>
<dbReference type="PDB" id="7LV0">
    <property type="method" value="EM"/>
    <property type="resolution" value="3.20 A"/>
    <property type="chains" value="J=10-166"/>
</dbReference>
<dbReference type="PDB" id="7M5D">
    <property type="method" value="EM"/>
    <property type="resolution" value="2.80 A"/>
    <property type="chains" value="j=10-165"/>
</dbReference>
<dbReference type="PDB" id="7N1P">
    <property type="method" value="EM"/>
    <property type="resolution" value="2.33 A"/>
    <property type="chains" value="SE=1-167"/>
</dbReference>
<dbReference type="PDB" id="7N2C">
    <property type="method" value="EM"/>
    <property type="resolution" value="2.72 A"/>
    <property type="chains" value="SE=1-167"/>
</dbReference>
<dbReference type="PDB" id="7N2U">
    <property type="method" value="EM"/>
    <property type="resolution" value="2.53 A"/>
    <property type="chains" value="SE=1-167"/>
</dbReference>
<dbReference type="PDB" id="7N2V">
    <property type="method" value="EM"/>
    <property type="resolution" value="2.54 A"/>
    <property type="chains" value="SE=1-167"/>
</dbReference>
<dbReference type="PDB" id="7N30">
    <property type="method" value="EM"/>
    <property type="resolution" value="2.66 A"/>
    <property type="chains" value="SE=1-167"/>
</dbReference>
<dbReference type="PDB" id="7N31">
    <property type="method" value="EM"/>
    <property type="resolution" value="2.69 A"/>
    <property type="chains" value="SE=1-167"/>
</dbReference>
<dbReference type="PDB" id="7NAR">
    <property type="method" value="EM"/>
    <property type="resolution" value="3.00 A"/>
    <property type="chains" value="E=1-167"/>
</dbReference>
<dbReference type="PDB" id="7NAS">
    <property type="method" value="EM"/>
    <property type="resolution" value="3.31 A"/>
    <property type="chains" value="E=1-167"/>
</dbReference>
<dbReference type="PDB" id="7NAT">
    <property type="method" value="EM"/>
    <property type="resolution" value="3.59 A"/>
    <property type="chains" value="E=1-167"/>
</dbReference>
<dbReference type="PDB" id="7NAU">
    <property type="method" value="EM"/>
    <property type="resolution" value="3.78 A"/>
    <property type="chains" value="E=1-167"/>
</dbReference>
<dbReference type="PDB" id="7NAV">
    <property type="method" value="EM"/>
    <property type="resolution" value="4.80 A"/>
    <property type="chains" value="E=1-167"/>
</dbReference>
<dbReference type="PDB" id="7NAX">
    <property type="method" value="EM"/>
    <property type="resolution" value="2.96 A"/>
    <property type="chains" value="E=1-167"/>
</dbReference>
<dbReference type="PDB" id="7NBU">
    <property type="method" value="EM"/>
    <property type="resolution" value="3.11 A"/>
    <property type="chains" value="E=10-165"/>
</dbReference>
<dbReference type="PDB" id="7O19">
    <property type="method" value="EM"/>
    <property type="resolution" value="2.90 A"/>
    <property type="chains" value="AE=1-167"/>
</dbReference>
<dbReference type="PDB" id="7O1A">
    <property type="method" value="EM"/>
    <property type="resolution" value="2.40 A"/>
    <property type="chains" value="AE=1-167"/>
</dbReference>
<dbReference type="PDB" id="7O1C">
    <property type="method" value="EM"/>
    <property type="resolution" value="2.60 A"/>
    <property type="chains" value="AE=1-167"/>
</dbReference>
<dbReference type="PDB" id="7O5H">
    <property type="method" value="EM"/>
    <property type="resolution" value="3.10 A"/>
    <property type="chains" value="E=10-167"/>
</dbReference>
<dbReference type="PDB" id="7OE0">
    <property type="method" value="EM"/>
    <property type="resolution" value="2.69 A"/>
    <property type="chains" value="E=2-167"/>
</dbReference>
<dbReference type="PDB" id="7OE1">
    <property type="method" value="EM"/>
    <property type="resolution" value="3.05 A"/>
    <property type="chains" value="E=2-167"/>
</dbReference>
<dbReference type="PDB" id="7OIZ">
    <property type="method" value="EM"/>
    <property type="resolution" value="2.90 A"/>
    <property type="chains" value="E=1-167"/>
</dbReference>
<dbReference type="PDB" id="7OJ0">
    <property type="method" value="EM"/>
    <property type="resolution" value="3.50 A"/>
    <property type="chains" value="E=1-167"/>
</dbReference>
<dbReference type="PDB" id="7P3K">
    <property type="method" value="EM"/>
    <property type="resolution" value="2.90 A"/>
    <property type="chains" value="E=1-167"/>
</dbReference>
<dbReference type="PDB" id="7PJU">
    <property type="method" value="EM"/>
    <property type="resolution" value="9.50 A"/>
    <property type="chains" value="e=1-167"/>
</dbReference>
<dbReference type="PDB" id="7PJV">
    <property type="method" value="EM"/>
    <property type="resolution" value="3.10 A"/>
    <property type="chains" value="e=1-167"/>
</dbReference>
<dbReference type="PDB" id="7PJY">
    <property type="method" value="EM"/>
    <property type="resolution" value="3.10 A"/>
    <property type="chains" value="e=1-167"/>
</dbReference>
<dbReference type="PDB" id="7QG8">
    <property type="method" value="EM"/>
    <property type="resolution" value="3.97 A"/>
    <property type="chains" value="4=4-165"/>
</dbReference>
<dbReference type="PDB" id="7QGH">
    <property type="method" value="EM"/>
    <property type="resolution" value="4.48 A"/>
    <property type="chains" value="4=4-165"/>
</dbReference>
<dbReference type="PDB" id="7QGN">
    <property type="method" value="EM"/>
    <property type="resolution" value="3.37 A"/>
    <property type="chains" value="4=4-165"/>
</dbReference>
<dbReference type="PDB" id="7QGR">
    <property type="method" value="EM"/>
    <property type="resolution" value="5.70 A"/>
    <property type="chains" value="4=4-165"/>
</dbReference>
<dbReference type="PDB" id="7S1G">
    <property type="method" value="EM"/>
    <property type="resolution" value="2.48 A"/>
    <property type="chains" value="G=1-167"/>
</dbReference>
<dbReference type="PDB" id="7S1H">
    <property type="method" value="EM"/>
    <property type="resolution" value="2.35 A"/>
    <property type="chains" value="G=1-167"/>
</dbReference>
<dbReference type="PDB" id="7S1I">
    <property type="method" value="EM"/>
    <property type="resolution" value="2.48 A"/>
    <property type="chains" value="G=1-167"/>
</dbReference>
<dbReference type="PDB" id="7S1J">
    <property type="method" value="EM"/>
    <property type="resolution" value="2.47 A"/>
    <property type="chains" value="G=1-167"/>
</dbReference>
<dbReference type="PDB" id="7S1K">
    <property type="method" value="EM"/>
    <property type="resolution" value="2.42 A"/>
    <property type="chains" value="G=1-167"/>
</dbReference>
<dbReference type="PDB" id="7SA4">
    <property type="method" value="EM"/>
    <property type="resolution" value="2.55 A"/>
    <property type="chains" value="j=1-167"/>
</dbReference>
<dbReference type="PDB" id="7SS9">
    <property type="method" value="EM"/>
    <property type="resolution" value="3.90 A"/>
    <property type="chains" value="J=10-166"/>
</dbReference>
<dbReference type="PDB" id="7SSD">
    <property type="method" value="EM"/>
    <property type="resolution" value="3.30 A"/>
    <property type="chains" value="J=10-166"/>
</dbReference>
<dbReference type="PDB" id="7SSL">
    <property type="method" value="EM"/>
    <property type="resolution" value="3.80 A"/>
    <property type="chains" value="J=10-166"/>
</dbReference>
<dbReference type="PDB" id="7SSN">
    <property type="method" value="EM"/>
    <property type="resolution" value="3.20 A"/>
    <property type="chains" value="J=10-166"/>
</dbReference>
<dbReference type="PDB" id="7SSO">
    <property type="method" value="EM"/>
    <property type="resolution" value="3.20 A"/>
    <property type="chains" value="J=10-166"/>
</dbReference>
<dbReference type="PDB" id="7SSW">
    <property type="method" value="EM"/>
    <property type="resolution" value="3.80 A"/>
    <property type="chains" value="J=10-166"/>
</dbReference>
<dbReference type="PDB" id="7ST2">
    <property type="method" value="EM"/>
    <property type="resolution" value="2.90 A"/>
    <property type="chains" value="J=10-166"/>
</dbReference>
<dbReference type="PDB" id="7ST6">
    <property type="method" value="EM"/>
    <property type="resolution" value="3.00 A"/>
    <property type="chains" value="J=10-166"/>
</dbReference>
<dbReference type="PDB" id="7ST7">
    <property type="method" value="EM"/>
    <property type="resolution" value="3.20 A"/>
    <property type="chains" value="J=10-166"/>
</dbReference>
<dbReference type="PDB" id="7TOS">
    <property type="method" value="EM"/>
    <property type="resolution" value="2.90 A"/>
    <property type="chains" value="S05=10-166"/>
</dbReference>
<dbReference type="PDB" id="7UG7">
    <property type="method" value="EM"/>
    <property type="resolution" value="2.58 A"/>
    <property type="chains" value="SE=1-167"/>
</dbReference>
<dbReference type="PDB" id="7UPH">
    <property type="method" value="EM"/>
    <property type="resolution" value="4.18 A"/>
    <property type="chains" value="Z=10-159"/>
</dbReference>
<dbReference type="PDB" id="7Y7C">
    <property type="method" value="EM"/>
    <property type="resolution" value="2.51 A"/>
    <property type="chains" value="E=1-167"/>
</dbReference>
<dbReference type="PDB" id="7Y7D">
    <property type="method" value="EM"/>
    <property type="resolution" value="2.58 A"/>
    <property type="chains" value="E=1-167"/>
</dbReference>
<dbReference type="PDB" id="7Y7E">
    <property type="method" value="EM"/>
    <property type="resolution" value="2.41 A"/>
    <property type="chains" value="E=1-167"/>
</dbReference>
<dbReference type="PDB" id="7Y7F">
    <property type="method" value="EM"/>
    <property type="resolution" value="2.43 A"/>
    <property type="chains" value="E=1-167"/>
</dbReference>
<dbReference type="PDB" id="7Y7G">
    <property type="method" value="EM"/>
    <property type="resolution" value="2.34 A"/>
    <property type="chains" value="E=1-167"/>
</dbReference>
<dbReference type="PDB" id="7Y7H">
    <property type="method" value="EM"/>
    <property type="resolution" value="2.51 A"/>
    <property type="chains" value="E=1-167"/>
</dbReference>
<dbReference type="PDB" id="7ZTA">
    <property type="method" value="EM"/>
    <property type="resolution" value="2.70 A"/>
    <property type="chains" value="S051=10-164"/>
</dbReference>
<dbReference type="PDB" id="8A3L">
    <property type="method" value="EM"/>
    <property type="resolution" value="3.42 A"/>
    <property type="chains" value="E=1-167"/>
</dbReference>
<dbReference type="PDB" id="8AKN">
    <property type="method" value="EM"/>
    <property type="resolution" value="2.30 A"/>
    <property type="chains" value="F=1-167"/>
</dbReference>
<dbReference type="PDB" id="8AM9">
    <property type="method" value="EM"/>
    <property type="resolution" value="2.80 A"/>
    <property type="chains" value="F=1-167"/>
</dbReference>
<dbReference type="PDB" id="8AYE">
    <property type="method" value="EM"/>
    <property type="resolution" value="1.96 A"/>
    <property type="chains" value="E=1-167"/>
</dbReference>
<dbReference type="PDB" id="8B0X">
    <property type="method" value="EM"/>
    <property type="resolution" value="1.55 A"/>
    <property type="chains" value="E=1-167"/>
</dbReference>
<dbReference type="PDB" id="8B7Y">
    <property type="method" value="EM"/>
    <property type="resolution" value="3.00 A"/>
    <property type="chains" value="G=1-167"/>
</dbReference>
<dbReference type="PDB" id="8BF7">
    <property type="method" value="EM"/>
    <property type="resolution" value="2.33 A"/>
    <property type="chains" value="i=1-167"/>
</dbReference>
<dbReference type="PDB" id="8BGE">
    <property type="method" value="EM"/>
    <property type="resolution" value="2.11 A"/>
    <property type="chains" value="i=1-167"/>
</dbReference>
<dbReference type="PDB" id="8BGH">
    <property type="method" value="EM"/>
    <property type="resolution" value="2.88 A"/>
    <property type="chains" value="i=1-167"/>
</dbReference>
<dbReference type="PDB" id="8BH4">
    <property type="method" value="EM"/>
    <property type="resolution" value="2.62 A"/>
    <property type="chains" value="i=1-167"/>
</dbReference>
<dbReference type="PDB" id="8BHJ">
    <property type="method" value="EM"/>
    <property type="resolution" value="2.81 A"/>
    <property type="chains" value="i=1-167"/>
</dbReference>
<dbReference type="PDB" id="8BHL">
    <property type="method" value="EM"/>
    <property type="resolution" value="2.21 A"/>
    <property type="chains" value="i=1-167"/>
</dbReference>
<dbReference type="PDB" id="8BHN">
    <property type="method" value="EM"/>
    <property type="resolution" value="2.85 A"/>
    <property type="chains" value="i=1-167"/>
</dbReference>
<dbReference type="PDB" id="8BHP">
    <property type="method" value="EM"/>
    <property type="resolution" value="2.37 A"/>
    <property type="chains" value="i=1-167"/>
</dbReference>
<dbReference type="PDB" id="8BIL">
    <property type="method" value="EM"/>
    <property type="resolution" value="2.04 A"/>
    <property type="chains" value="i=1-167"/>
</dbReference>
<dbReference type="PDB" id="8BIM">
    <property type="method" value="EM"/>
    <property type="resolution" value="2.04 A"/>
    <property type="chains" value="i=1-167"/>
</dbReference>
<dbReference type="PDB" id="8CA7">
    <property type="method" value="EM"/>
    <property type="resolution" value="2.06 A"/>
    <property type="chains" value="E=1-167"/>
</dbReference>
<dbReference type="PDB" id="8CAI">
    <property type="method" value="EM"/>
    <property type="resolution" value="2.08 A"/>
    <property type="chains" value="E=1-167"/>
</dbReference>
<dbReference type="PDB" id="8CEP">
    <property type="method" value="EM"/>
    <property type="resolution" value="2.04 A"/>
    <property type="chains" value="E=1-167"/>
</dbReference>
<dbReference type="PDB" id="8CF1">
    <property type="method" value="EM"/>
    <property type="resolution" value="1.82 A"/>
    <property type="chains" value="E=1-167"/>
</dbReference>
<dbReference type="PDB" id="8CGJ">
    <property type="method" value="EM"/>
    <property type="resolution" value="1.79 A"/>
    <property type="chains" value="E=1-167"/>
</dbReference>
<dbReference type="PDB" id="8CGR">
    <property type="method" value="EM"/>
    <property type="resolution" value="2.12 A"/>
    <property type="chains" value="E=1-167"/>
</dbReference>
<dbReference type="PDB" id="8CGU">
    <property type="method" value="EM"/>
    <property type="resolution" value="1.89 A"/>
    <property type="chains" value="E=1-167"/>
</dbReference>
<dbReference type="PDB" id="8EIU">
    <property type="method" value="EM"/>
    <property type="resolution" value="2.24 A"/>
    <property type="chains" value="E=1-167"/>
</dbReference>
<dbReference type="PDB" id="8EKC">
    <property type="method" value="EM"/>
    <property type="resolution" value="2.70 A"/>
    <property type="chains" value="e=1-167"/>
</dbReference>
<dbReference type="PDB" id="8EMM">
    <property type="method" value="EM"/>
    <property type="resolution" value="2.10 A"/>
    <property type="chains" value="E=1-167"/>
</dbReference>
<dbReference type="PDB" id="8EYQ">
    <property type="method" value="EM"/>
    <property type="resolution" value="3.30 A"/>
    <property type="chains" value="E=1-167"/>
</dbReference>
<dbReference type="PDB" id="8EYT">
    <property type="method" value="EM"/>
    <property type="resolution" value="2.80 A"/>
    <property type="chains" value="E=1-167"/>
</dbReference>
<dbReference type="PDB" id="8FIZ">
    <property type="method" value="EM"/>
    <property type="resolution" value="3.80 A"/>
    <property type="chains" value="AP=1-167"/>
</dbReference>
<dbReference type="PDB" id="8FTO">
    <property type="method" value="EM"/>
    <property type="resolution" value="1.85 A"/>
    <property type="chains" value="E=1-167"/>
</dbReference>
<dbReference type="PDB" id="8FZD">
    <property type="method" value="EM"/>
    <property type="resolution" value="3.10 A"/>
    <property type="chains" value="e=1-167"/>
</dbReference>
<dbReference type="PDB" id="8FZE">
    <property type="method" value="EM"/>
    <property type="resolution" value="3.00 A"/>
    <property type="chains" value="e=1-167"/>
</dbReference>
<dbReference type="PDB" id="8FZF">
    <property type="method" value="EM"/>
    <property type="resolution" value="3.20 A"/>
    <property type="chains" value="e=1-167"/>
</dbReference>
<dbReference type="PDB" id="8FZG">
    <property type="method" value="EM"/>
    <property type="resolution" value="3.10 A"/>
    <property type="chains" value="e=1-167"/>
</dbReference>
<dbReference type="PDB" id="8FZH">
    <property type="method" value="EM"/>
    <property type="resolution" value="2.90 A"/>
    <property type="chains" value="e=1-167"/>
</dbReference>
<dbReference type="PDB" id="8FZI">
    <property type="method" value="EM"/>
    <property type="resolution" value="3.10 A"/>
    <property type="chains" value="e=1-167"/>
</dbReference>
<dbReference type="PDB" id="8FZJ">
    <property type="method" value="EM"/>
    <property type="resolution" value="3.00 A"/>
    <property type="chains" value="e=1-167"/>
</dbReference>
<dbReference type="PDB" id="8G2U">
    <property type="method" value="EM"/>
    <property type="resolution" value="3.00 A"/>
    <property type="chains" value="d=10-159"/>
</dbReference>
<dbReference type="PDB" id="8G31">
    <property type="method" value="EM"/>
    <property type="resolution" value="3.20 A"/>
    <property type="chains" value="d=10-159"/>
</dbReference>
<dbReference type="PDB" id="8G34">
    <property type="method" value="EM"/>
    <property type="resolution" value="3.20 A"/>
    <property type="chains" value="d=10-159"/>
</dbReference>
<dbReference type="PDB" id="8G38">
    <property type="method" value="EM"/>
    <property type="resolution" value="3.20 A"/>
    <property type="chains" value="d=10-159"/>
</dbReference>
<dbReference type="PDB" id="8G6W">
    <property type="method" value="EM"/>
    <property type="resolution" value="2.02 A"/>
    <property type="chains" value="E=1-167"/>
</dbReference>
<dbReference type="PDB" id="8G7P">
    <property type="method" value="EM"/>
    <property type="resolution" value="2.90 A"/>
    <property type="chains" value="e=1-167"/>
</dbReference>
<dbReference type="PDB" id="8G7Q">
    <property type="method" value="EM"/>
    <property type="resolution" value="3.10 A"/>
    <property type="chains" value="e=1-167"/>
</dbReference>
<dbReference type="PDB" id="8G7R">
    <property type="method" value="EM"/>
    <property type="resolution" value="2.80 A"/>
    <property type="chains" value="e=1-167"/>
</dbReference>
<dbReference type="PDB" id="8G7S">
    <property type="method" value="EM"/>
    <property type="resolution" value="3.10 A"/>
    <property type="chains" value="e=1-167"/>
</dbReference>
<dbReference type="PDB" id="8GHU">
    <property type="method" value="EM"/>
    <property type="resolution" value="3.00 A"/>
    <property type="chains" value="e=10-159"/>
</dbReference>
<dbReference type="PDB" id="8HSP">
    <property type="method" value="EM"/>
    <property type="resolution" value="2.32 A"/>
    <property type="chains" value="E=1-167"/>
</dbReference>
<dbReference type="PDB" id="8HTZ">
    <property type="method" value="EM"/>
    <property type="resolution" value="2.40 A"/>
    <property type="chains" value="E=1-167"/>
</dbReference>
<dbReference type="PDB" id="8HU1">
    <property type="method" value="EM"/>
    <property type="resolution" value="2.69 A"/>
    <property type="chains" value="E=1-167"/>
</dbReference>
<dbReference type="PDB" id="8IFB">
    <property type="method" value="EM"/>
    <property type="resolution" value="2.43 A"/>
    <property type="chains" value="E=1-167"/>
</dbReference>
<dbReference type="PDB" id="8IFC">
    <property type="method" value="EM"/>
    <property type="resolution" value="2.90 A"/>
    <property type="chains" value="E=1-167"/>
</dbReference>
<dbReference type="PDB" id="8JSG">
    <property type="method" value="EM"/>
    <property type="resolution" value="4.60 A"/>
    <property type="chains" value="k=2-159"/>
</dbReference>
<dbReference type="PDB" id="8JSH">
    <property type="method" value="EM"/>
    <property type="resolution" value="4.40 A"/>
    <property type="chains" value="k=1-167"/>
</dbReference>
<dbReference type="PDB" id="8K3O">
    <property type="method" value="EM"/>
    <property type="resolution" value="3.88 A"/>
    <property type="chains" value="E=1-167"/>
</dbReference>
<dbReference type="PDB" id="8K4E">
    <property type="method" value="EM"/>
    <property type="resolution" value="3.40 A"/>
    <property type="chains" value="E=1-167"/>
</dbReference>
<dbReference type="PDB" id="8P16">
    <property type="method" value="EM"/>
    <property type="resolution" value="2.77 A"/>
    <property type="chains" value="j=1-167"/>
</dbReference>
<dbReference type="PDB" id="8P17">
    <property type="method" value="EM"/>
    <property type="resolution" value="2.78 A"/>
    <property type="chains" value="j=1-167"/>
</dbReference>
<dbReference type="PDB" id="8P18">
    <property type="method" value="EM"/>
    <property type="resolution" value="2.77 A"/>
    <property type="chains" value="j=1-167"/>
</dbReference>
<dbReference type="PDB" id="8PEG">
    <property type="method" value="EM"/>
    <property type="resolution" value="3.30 A"/>
    <property type="chains" value="E=1-167"/>
</dbReference>
<dbReference type="PDB" id="8PHJ">
    <property type="method" value="EM"/>
    <property type="resolution" value="3.67 A"/>
    <property type="chains" value="E=1-167"/>
</dbReference>
<dbReference type="PDB" id="8PKL">
    <property type="method" value="EM"/>
    <property type="resolution" value="3.09 A"/>
    <property type="chains" value="E=1-167"/>
</dbReference>
<dbReference type="PDB" id="8PVA">
    <property type="method" value="EM"/>
    <property type="resolution" value="4.50 A"/>
    <property type="chains" value="E=1-167"/>
</dbReference>
<dbReference type="PDB" id="8Q4F">
    <property type="method" value="EM"/>
    <property type="resolution" value="3.10 A"/>
    <property type="chains" value="E=1-167"/>
</dbReference>
<dbReference type="PDB" id="8QBT">
    <property type="method" value="EM"/>
    <property type="resolution" value="2.20 A"/>
    <property type="chains" value="m=1-167"/>
</dbReference>
<dbReference type="PDB" id="8QK7">
    <property type="method" value="EM"/>
    <property type="resolution" value="2.77 A"/>
    <property type="chains" value="j=1-167"/>
</dbReference>
<dbReference type="PDB" id="8QOA">
    <property type="method" value="EM"/>
    <property type="resolution" value="2.00 A"/>
    <property type="chains" value="E=1-167"/>
</dbReference>
<dbReference type="PDB" id="8R3V">
    <property type="method" value="EM"/>
    <property type="resolution" value="3.28 A"/>
    <property type="chains" value="E1/E2=1-167"/>
</dbReference>
<dbReference type="PDB" id="8R6C">
    <property type="method" value="EM"/>
    <property type="resolution" value="2.20 A"/>
    <property type="chains" value="E=1-167"/>
</dbReference>
<dbReference type="PDB" id="8R8M">
    <property type="method" value="EM"/>
    <property type="resolution" value="2.40 A"/>
    <property type="chains" value="E=1-167"/>
</dbReference>
<dbReference type="PDB" id="8RCL">
    <property type="method" value="EM"/>
    <property type="resolution" value="3.49 A"/>
    <property type="chains" value="E1/E2=1-167"/>
</dbReference>
<dbReference type="PDB" id="8RCM">
    <property type="method" value="EM"/>
    <property type="resolution" value="3.59 A"/>
    <property type="chains" value="E1/E2=1-167"/>
</dbReference>
<dbReference type="PDB" id="8RCS">
    <property type="method" value="EM"/>
    <property type="resolution" value="4.46 A"/>
    <property type="chains" value="E1/E2=1-167"/>
</dbReference>
<dbReference type="PDB" id="8RCT">
    <property type="method" value="EM"/>
    <property type="resolution" value="5.32 A"/>
    <property type="chains" value="E1/E2=1-167"/>
</dbReference>
<dbReference type="PDB" id="8SYL">
    <property type="method" value="EM"/>
    <property type="resolution" value="2.90 A"/>
    <property type="chains" value="e=1-167"/>
</dbReference>
<dbReference type="PDB" id="8T5D">
    <property type="method" value="EM"/>
    <property type="resolution" value="3.20 A"/>
    <property type="chains" value="d=10-159"/>
</dbReference>
<dbReference type="PDB" id="8T5H">
    <property type="method" value="EM"/>
    <property type="resolution" value="3.30 A"/>
    <property type="chains" value="d=10-159"/>
</dbReference>
<dbReference type="PDB" id="8UPO">
    <property type="method" value="EM"/>
    <property type="resolution" value="5.50 A"/>
    <property type="chains" value="K=1-167"/>
</dbReference>
<dbReference type="PDB" id="8UPR">
    <property type="method" value="EM"/>
    <property type="resolution" value="5.30 A"/>
    <property type="chains" value="K=1-167"/>
</dbReference>
<dbReference type="PDB" id="8UQL">
    <property type="method" value="EM"/>
    <property type="resolution" value="3.20 A"/>
    <property type="chains" value="K=1-167"/>
</dbReference>
<dbReference type="PDB" id="8UQM">
    <property type="method" value="EM"/>
    <property type="resolution" value="5.30 A"/>
    <property type="chains" value="K=1-167"/>
</dbReference>
<dbReference type="PDB" id="8UQP">
    <property type="method" value="EM"/>
    <property type="resolution" value="3.80 A"/>
    <property type="chains" value="K=1-167"/>
</dbReference>
<dbReference type="PDB" id="8UR0">
    <property type="method" value="EM"/>
    <property type="resolution" value="3.40 A"/>
    <property type="chains" value="K=1-167"/>
</dbReference>
<dbReference type="PDB" id="8URH">
    <property type="method" value="EM"/>
    <property type="resolution" value="5.70 A"/>
    <property type="chains" value="K=1-167"/>
</dbReference>
<dbReference type="PDB" id="8URI">
    <property type="method" value="EM"/>
    <property type="resolution" value="5.30 A"/>
    <property type="chains" value="K=1-167"/>
</dbReference>
<dbReference type="PDB" id="8URX">
    <property type="method" value="EM"/>
    <property type="resolution" value="6.60 A"/>
    <property type="chains" value="K=1-167"/>
</dbReference>
<dbReference type="PDB" id="8URY">
    <property type="method" value="EM"/>
    <property type="resolution" value="3.10 A"/>
    <property type="chains" value="K=1-167"/>
</dbReference>
<dbReference type="PDB" id="8VS9">
    <property type="method" value="EM"/>
    <property type="resolution" value="3.90 A"/>
    <property type="chains" value="S05=1-167"/>
</dbReference>
<dbReference type="PDB" id="8VSA">
    <property type="method" value="EM"/>
    <property type="resolution" value="3.70 A"/>
    <property type="chains" value="S05=1-167"/>
</dbReference>
<dbReference type="PDB" id="8YUO">
    <property type="method" value="EM"/>
    <property type="resolution" value="2.25 A"/>
    <property type="chains" value="E=1-167"/>
</dbReference>
<dbReference type="PDB" id="8YUP">
    <property type="method" value="EM"/>
    <property type="resolution" value="2.39 A"/>
    <property type="chains" value="E=1-167"/>
</dbReference>
<dbReference type="PDB" id="8YUQ">
    <property type="method" value="EM"/>
    <property type="resolution" value="2.41 A"/>
    <property type="chains" value="E=1-167"/>
</dbReference>
<dbReference type="PDB" id="8YUR">
    <property type="method" value="EM"/>
    <property type="resolution" value="2.47 A"/>
    <property type="chains" value="E=1-167"/>
</dbReference>
<dbReference type="PDB" id="8YUS">
    <property type="method" value="EM"/>
    <property type="resolution" value="2.43 A"/>
    <property type="chains" value="E=1-167"/>
</dbReference>
<dbReference type="PDB" id="9AX7">
    <property type="method" value="EM"/>
    <property type="resolution" value="2.63 A"/>
    <property type="chains" value="E=1-167"/>
</dbReference>
<dbReference type="PDB" id="9CG5">
    <property type="method" value="EM"/>
    <property type="resolution" value="2.59 A"/>
    <property type="chains" value="E=1-167"/>
</dbReference>
<dbReference type="PDB" id="9CG6">
    <property type="method" value="EM"/>
    <property type="resolution" value="2.61 A"/>
    <property type="chains" value="E=1-167"/>
</dbReference>
<dbReference type="PDB" id="9CG7">
    <property type="method" value="EM"/>
    <property type="resolution" value="2.75 A"/>
    <property type="chains" value="E=1-167"/>
</dbReference>
<dbReference type="PDB" id="9DUK">
    <property type="method" value="EM"/>
    <property type="resolution" value="2.56 A"/>
    <property type="chains" value="E=1-167"/>
</dbReference>
<dbReference type="PDB" id="9DUL">
    <property type="method" value="EM"/>
    <property type="resolution" value="2.56 A"/>
    <property type="chains" value="E=1-167"/>
</dbReference>
<dbReference type="PDB" id="9FBV">
    <property type="method" value="EM"/>
    <property type="resolution" value="2.40 A"/>
    <property type="chains" value="E=1-167"/>
</dbReference>
<dbReference type="PDB" id="9GFT">
    <property type="method" value="EM"/>
    <property type="resolution" value="3.10 A"/>
    <property type="chains" value="4/AE=1-167"/>
</dbReference>
<dbReference type="PDB" id="9GGR">
    <property type="method" value="EM"/>
    <property type="resolution" value="3.20 A"/>
    <property type="chains" value="4/AE=1-167"/>
</dbReference>
<dbReference type="PDB" id="9GUP">
    <property type="method" value="EM"/>
    <property type="resolution" value="2.80 A"/>
    <property type="chains" value="F=10-165"/>
</dbReference>
<dbReference type="PDB" id="9GUQ">
    <property type="method" value="EM"/>
    <property type="resolution" value="3.10 A"/>
    <property type="chains" value="F=10-165"/>
</dbReference>
<dbReference type="PDB" id="9GUS">
    <property type="method" value="EM"/>
    <property type="resolution" value="3.50 A"/>
    <property type="chains" value="F=10-165"/>
</dbReference>
<dbReference type="PDB" id="9GUT">
    <property type="method" value="EM"/>
    <property type="resolution" value="2.80 A"/>
    <property type="chains" value="F=10-165"/>
</dbReference>
<dbReference type="PDB" id="9GUU">
    <property type="method" value="EM"/>
    <property type="resolution" value="2.50 A"/>
    <property type="chains" value="F=10-165"/>
</dbReference>
<dbReference type="PDB" id="9GUW">
    <property type="method" value="EM"/>
    <property type="resolution" value="3.10 A"/>
    <property type="chains" value="F=10-166"/>
</dbReference>
<dbReference type="PDB" id="9GUX">
    <property type="method" value="EM"/>
    <property type="resolution" value="3.30 A"/>
    <property type="chains" value="F=10-166"/>
</dbReference>
<dbReference type="PDB" id="9MOR">
    <property type="method" value="EM"/>
    <property type="resolution" value="2.65 A"/>
    <property type="chains" value="j=1-167"/>
</dbReference>
<dbReference type="PDB" id="9MQ4">
    <property type="method" value="EM"/>
    <property type="resolution" value="2.78 A"/>
    <property type="chains" value="j=1-167"/>
</dbReference>
<dbReference type="PDBsum" id="1EG0"/>
<dbReference type="PDBsum" id="2YKR"/>
<dbReference type="PDBsum" id="3IY8"/>
<dbReference type="PDBsum" id="3J9Y"/>
<dbReference type="PDBsum" id="3J9Z"/>
<dbReference type="PDBsum" id="3JA1"/>
<dbReference type="PDBsum" id="3JBU"/>
<dbReference type="PDBsum" id="3JBV"/>
<dbReference type="PDBsum" id="3JCD"/>
<dbReference type="PDBsum" id="3JCE"/>
<dbReference type="PDBsum" id="3JCJ"/>
<dbReference type="PDBsum" id="3JCN"/>
<dbReference type="PDBsum" id="4A2I"/>
<dbReference type="PDBsum" id="4ADV"/>
<dbReference type="PDBsum" id="4U1U"/>
<dbReference type="PDBsum" id="4U1V"/>
<dbReference type="PDBsum" id="4U20"/>
<dbReference type="PDBsum" id="4U24"/>
<dbReference type="PDBsum" id="4U25"/>
<dbReference type="PDBsum" id="4U26"/>
<dbReference type="PDBsum" id="4U27"/>
<dbReference type="PDBsum" id="4V47"/>
<dbReference type="PDBsum" id="4V48"/>
<dbReference type="PDBsum" id="4V4H"/>
<dbReference type="PDBsum" id="4V4Q"/>
<dbReference type="PDBsum" id="4V4V"/>
<dbReference type="PDBsum" id="4V4W"/>
<dbReference type="PDBsum" id="4V50"/>
<dbReference type="PDBsum" id="4V52"/>
<dbReference type="PDBsum" id="4V53"/>
<dbReference type="PDBsum" id="4V54"/>
<dbReference type="PDBsum" id="4V55"/>
<dbReference type="PDBsum" id="4V56"/>
<dbReference type="PDBsum" id="4V57"/>
<dbReference type="PDBsum" id="4V5B"/>
<dbReference type="PDBsum" id="4V5H"/>
<dbReference type="PDBsum" id="4V5Y"/>
<dbReference type="PDBsum" id="4V64"/>
<dbReference type="PDBsum" id="4V65"/>
<dbReference type="PDBsum" id="4V66"/>
<dbReference type="PDBsum" id="4V69"/>
<dbReference type="PDBsum" id="4V6C"/>
<dbReference type="PDBsum" id="4V6D"/>
<dbReference type="PDBsum" id="4V6E"/>
<dbReference type="PDBsum" id="4V6K"/>
<dbReference type="PDBsum" id="4V6L"/>
<dbReference type="PDBsum" id="4V6M"/>
<dbReference type="PDBsum" id="4V6N"/>
<dbReference type="PDBsum" id="4V6O"/>
<dbReference type="PDBsum" id="4V6P"/>
<dbReference type="PDBsum" id="4V6Q"/>
<dbReference type="PDBsum" id="4V6R"/>
<dbReference type="PDBsum" id="4V6S"/>
<dbReference type="PDBsum" id="4V6T"/>
<dbReference type="PDBsum" id="4V6V"/>
<dbReference type="PDBsum" id="4V6Y"/>
<dbReference type="PDBsum" id="4V6Z"/>
<dbReference type="PDBsum" id="4V70"/>
<dbReference type="PDBsum" id="4V71"/>
<dbReference type="PDBsum" id="4V72"/>
<dbReference type="PDBsum" id="4V73"/>
<dbReference type="PDBsum" id="4V74"/>
<dbReference type="PDBsum" id="4V75"/>
<dbReference type="PDBsum" id="4V76"/>
<dbReference type="PDBsum" id="4V77"/>
<dbReference type="PDBsum" id="4V78"/>
<dbReference type="PDBsum" id="4V79"/>
<dbReference type="PDBsum" id="4V7A"/>
<dbReference type="PDBsum" id="4V7B"/>
<dbReference type="PDBsum" id="4V7C"/>
<dbReference type="PDBsum" id="4V7D"/>
<dbReference type="PDBsum" id="4V7I"/>
<dbReference type="PDBsum" id="4V7S"/>
<dbReference type="PDBsum" id="4V7T"/>
<dbReference type="PDBsum" id="4V7U"/>
<dbReference type="PDBsum" id="4V7V"/>
<dbReference type="PDBsum" id="4V85"/>
<dbReference type="PDBsum" id="4V89"/>
<dbReference type="PDBsum" id="4V9C"/>
<dbReference type="PDBsum" id="4V9D"/>
<dbReference type="PDBsum" id="4V9O"/>
<dbReference type="PDBsum" id="4V9P"/>
<dbReference type="PDBsum" id="4WF1"/>
<dbReference type="PDBsum" id="4WOI"/>
<dbReference type="PDBsum" id="4WWW"/>
<dbReference type="PDBsum" id="4YBB"/>
<dbReference type="PDBsum" id="5AFI"/>
<dbReference type="PDBsum" id="5H5U"/>
<dbReference type="PDBsum" id="5IQR"/>
<dbReference type="PDBsum" id="5IT8"/>
<dbReference type="PDBsum" id="5J5B"/>
<dbReference type="PDBsum" id="5J7L"/>
<dbReference type="PDBsum" id="5J88"/>
<dbReference type="PDBsum" id="5J8A"/>
<dbReference type="PDBsum" id="5J91"/>
<dbReference type="PDBsum" id="5JC9"/>
<dbReference type="PDBsum" id="5JTE"/>
<dbReference type="PDBsum" id="5JU8"/>
<dbReference type="PDBsum" id="5KCR"/>
<dbReference type="PDBsum" id="5KCS"/>
<dbReference type="PDBsum" id="5KPS"/>
<dbReference type="PDBsum" id="5KPV"/>
<dbReference type="PDBsum" id="5KPW"/>
<dbReference type="PDBsum" id="5KPX"/>
<dbReference type="PDBsum" id="5L3P"/>
<dbReference type="PDBsum" id="5LZA"/>
<dbReference type="PDBsum" id="5LZB"/>
<dbReference type="PDBsum" id="5LZC"/>
<dbReference type="PDBsum" id="5LZD"/>
<dbReference type="PDBsum" id="5LZE"/>
<dbReference type="PDBsum" id="5LZF"/>
<dbReference type="PDBsum" id="5MDV"/>
<dbReference type="PDBsum" id="5MDW"/>
<dbReference type="PDBsum" id="5MDY"/>
<dbReference type="PDBsum" id="5MDZ"/>
<dbReference type="PDBsum" id="5ME0"/>
<dbReference type="PDBsum" id="5ME1"/>
<dbReference type="PDBsum" id="5MGP"/>
<dbReference type="PDBsum" id="5MY1"/>
<dbReference type="PDBsum" id="5NO2"/>
<dbReference type="PDBsum" id="5NO3"/>
<dbReference type="PDBsum" id="5NO4"/>
<dbReference type="PDBsum" id="5NP6"/>
<dbReference type="PDBsum" id="5NWY"/>
<dbReference type="PDBsum" id="5O2R"/>
<dbReference type="PDBsum" id="5U4I"/>
<dbReference type="PDBsum" id="5U4J"/>
<dbReference type="PDBsum" id="5U9F"/>
<dbReference type="PDBsum" id="5U9G"/>
<dbReference type="PDBsum" id="5UYK"/>
<dbReference type="PDBsum" id="5UYL"/>
<dbReference type="PDBsum" id="5UYM"/>
<dbReference type="PDBsum" id="5UYN"/>
<dbReference type="PDBsum" id="5UYP"/>
<dbReference type="PDBsum" id="5UYQ"/>
<dbReference type="PDBsum" id="5UZ4"/>
<dbReference type="PDBsum" id="5WDT"/>
<dbReference type="PDBsum" id="5WE4"/>
<dbReference type="PDBsum" id="5WE6"/>
<dbReference type="PDBsum" id="5WF0"/>
<dbReference type="PDBsum" id="5WFK"/>
<dbReference type="PDBsum" id="5WFS"/>
<dbReference type="PDBsum" id="6AWB"/>
<dbReference type="PDBsum" id="6AWC"/>
<dbReference type="PDBsum" id="6AWD"/>
<dbReference type="PDBsum" id="6BU8"/>
<dbReference type="PDBsum" id="6BY1"/>
<dbReference type="PDBsum" id="6C4I"/>
<dbReference type="PDBsum" id="6DNC"/>
<dbReference type="PDBsum" id="6ENF"/>
<dbReference type="PDBsum" id="6ENJ"/>
<dbReference type="PDBsum" id="6ENU"/>
<dbReference type="PDBsum" id="6GWT"/>
<dbReference type="PDBsum" id="6GXM"/>
<dbReference type="PDBsum" id="6GXN"/>
<dbReference type="PDBsum" id="6GXO"/>
<dbReference type="PDBsum" id="6GXP"/>
<dbReference type="PDBsum" id="6H4N"/>
<dbReference type="PDBsum" id="6H58"/>
<dbReference type="PDBsum" id="6HRM"/>
<dbReference type="PDBsum" id="6I7V"/>
<dbReference type="PDBsum" id="6NQB"/>
<dbReference type="PDBsum" id="6O7K"/>
<dbReference type="PDBsum" id="6O9J"/>
<dbReference type="PDBsum" id="6O9K"/>
<dbReference type="PDBsum" id="6OFX"/>
<dbReference type="PDBsum" id="6OG7"/>
<dbReference type="PDBsum" id="6OGF"/>
<dbReference type="PDBsum" id="6OGG"/>
<dbReference type="PDBsum" id="6OGI"/>
<dbReference type="PDBsum" id="6OM6"/>
<dbReference type="PDBsum" id="6ORE"/>
<dbReference type="PDBsum" id="6ORL"/>
<dbReference type="PDBsum" id="6OSK"/>
<dbReference type="PDBsum" id="6OSQ"/>
<dbReference type="PDBsum" id="6OST"/>
<dbReference type="PDBsum" id="6OT3"/>
<dbReference type="PDBsum" id="6OUO"/>
<dbReference type="PDBsum" id="6Q97"/>
<dbReference type="PDBsum" id="6Q98"/>
<dbReference type="PDBsum" id="6Q9A"/>
<dbReference type="PDBsum" id="6SZS"/>
<dbReference type="PDBsum" id="6TBV"/>
<dbReference type="PDBsum" id="6TC3"/>
<dbReference type="PDBsum" id="6VU3"/>
<dbReference type="PDBsum" id="6VWL"/>
<dbReference type="PDBsum" id="6VWM"/>
<dbReference type="PDBsum" id="6VWN"/>
<dbReference type="PDBsum" id="6VYQ"/>
<dbReference type="PDBsum" id="6VYR"/>
<dbReference type="PDBsum" id="6VYS"/>
<dbReference type="PDBsum" id="6VYT"/>
<dbReference type="PDBsum" id="6VYU"/>
<dbReference type="PDBsum" id="6VYW"/>
<dbReference type="PDBsum" id="6VYX"/>
<dbReference type="PDBsum" id="6VYY"/>
<dbReference type="PDBsum" id="6VYZ"/>
<dbReference type="PDBsum" id="6VZ2"/>
<dbReference type="PDBsum" id="6VZ3"/>
<dbReference type="PDBsum" id="6VZ5"/>
<dbReference type="PDBsum" id="6VZ7"/>
<dbReference type="PDBsum" id="6VZJ"/>
<dbReference type="PDBsum" id="6W6K"/>
<dbReference type="PDBsum" id="6W77"/>
<dbReference type="PDBsum" id="6W7M"/>
<dbReference type="PDBsum" id="6W7N"/>
<dbReference type="PDBsum" id="6W7W"/>
<dbReference type="PDBsum" id="6WD0"/>
<dbReference type="PDBsum" id="6WD1"/>
<dbReference type="PDBsum" id="6WD2"/>
<dbReference type="PDBsum" id="6WD3"/>
<dbReference type="PDBsum" id="6WD4"/>
<dbReference type="PDBsum" id="6WD5"/>
<dbReference type="PDBsum" id="6WD6"/>
<dbReference type="PDBsum" id="6WD7"/>
<dbReference type="PDBsum" id="6WD8"/>
<dbReference type="PDBsum" id="6WD9"/>
<dbReference type="PDBsum" id="6WDA"/>
<dbReference type="PDBsum" id="6WDB"/>
<dbReference type="PDBsum" id="6WDC"/>
<dbReference type="PDBsum" id="6WDD"/>
<dbReference type="PDBsum" id="6WDE"/>
<dbReference type="PDBsum" id="6WDF"/>
<dbReference type="PDBsum" id="6WDG"/>
<dbReference type="PDBsum" id="6WDH"/>
<dbReference type="PDBsum" id="6WDI"/>
<dbReference type="PDBsum" id="6WDJ"/>
<dbReference type="PDBsum" id="6WDK"/>
<dbReference type="PDBsum" id="6WDL"/>
<dbReference type="PDBsum" id="6WDM"/>
<dbReference type="PDBsum" id="6WNV"/>
<dbReference type="PDBsum" id="6WNW"/>
<dbReference type="PDBsum" id="6X6T"/>
<dbReference type="PDBsum" id="6X7F"/>
<dbReference type="PDBsum" id="6X7K"/>
<dbReference type="PDBsum" id="6X9Q"/>
<dbReference type="PDBsum" id="6XDQ"/>
<dbReference type="PDBsum" id="6XDR"/>
<dbReference type="PDBsum" id="6XE0"/>
<dbReference type="PDBsum" id="6XGF"/>
<dbReference type="PDBsum" id="6XII"/>
<dbReference type="PDBsum" id="6XIJ"/>
<dbReference type="PDBsum" id="6XZA"/>
<dbReference type="PDBsum" id="6XZB"/>
<dbReference type="PDBsum" id="6Y69"/>
<dbReference type="PDBsum" id="6ZTJ"/>
<dbReference type="PDBsum" id="6ZTL"/>
<dbReference type="PDBsum" id="6ZTM"/>
<dbReference type="PDBsum" id="6ZTN"/>
<dbReference type="PDBsum" id="6ZTO"/>
<dbReference type="PDBsum" id="6ZTP"/>
<dbReference type="PDBsum" id="6ZU1"/>
<dbReference type="PDBsum" id="7ABZ"/>
<dbReference type="PDBsum" id="7AC7"/>
<dbReference type="PDBsum" id="7ACJ"/>
<dbReference type="PDBsum" id="7ACR"/>
<dbReference type="PDBsum" id="7AFI"/>
<dbReference type="PDBsum" id="7AFL"/>
<dbReference type="PDBsum" id="7AFO"/>
<dbReference type="PDBsum" id="7B5K"/>
<dbReference type="PDBsum" id="7BOD"/>
<dbReference type="PDBsum" id="7BOE"/>
<dbReference type="PDBsum" id="7BOF"/>
<dbReference type="PDBsum" id="7BOG"/>
<dbReference type="PDBsum" id="7BOH"/>
<dbReference type="PDBsum" id="7BOI"/>
<dbReference type="PDBsum" id="7D6Z"/>
<dbReference type="PDBsum" id="7D80"/>
<dbReference type="PDBsum" id="7JSS"/>
<dbReference type="PDBsum" id="7JSW"/>
<dbReference type="PDBsum" id="7JSZ"/>
<dbReference type="PDBsum" id="7JT1"/>
<dbReference type="PDBsum" id="7JT2"/>
<dbReference type="PDBsum" id="7JT3"/>
<dbReference type="PDBsum" id="7K00"/>
<dbReference type="PDBsum" id="7K50"/>
<dbReference type="PDBsum" id="7K51"/>
<dbReference type="PDBsum" id="7K52"/>
<dbReference type="PDBsum" id="7K53"/>
<dbReference type="PDBsum" id="7K54"/>
<dbReference type="PDBsum" id="7K55"/>
<dbReference type="PDBsum" id="7LV0"/>
<dbReference type="PDBsum" id="7M5D"/>
<dbReference type="PDBsum" id="7N1P"/>
<dbReference type="PDBsum" id="7N2C"/>
<dbReference type="PDBsum" id="7N2U"/>
<dbReference type="PDBsum" id="7N2V"/>
<dbReference type="PDBsum" id="7N30"/>
<dbReference type="PDBsum" id="7N31"/>
<dbReference type="PDBsum" id="7NAR"/>
<dbReference type="PDBsum" id="7NAS"/>
<dbReference type="PDBsum" id="7NAT"/>
<dbReference type="PDBsum" id="7NAU"/>
<dbReference type="PDBsum" id="7NAV"/>
<dbReference type="PDBsum" id="7NAX"/>
<dbReference type="PDBsum" id="7NBU"/>
<dbReference type="PDBsum" id="7O19"/>
<dbReference type="PDBsum" id="7O1A"/>
<dbReference type="PDBsum" id="7O1C"/>
<dbReference type="PDBsum" id="7O5H"/>
<dbReference type="PDBsum" id="7OE0"/>
<dbReference type="PDBsum" id="7OE1"/>
<dbReference type="PDBsum" id="7OIZ"/>
<dbReference type="PDBsum" id="7OJ0"/>
<dbReference type="PDBsum" id="7P3K"/>
<dbReference type="PDBsum" id="7PJU"/>
<dbReference type="PDBsum" id="7PJV"/>
<dbReference type="PDBsum" id="7PJY"/>
<dbReference type="PDBsum" id="7QG8"/>
<dbReference type="PDBsum" id="7QGH"/>
<dbReference type="PDBsum" id="7QGN"/>
<dbReference type="PDBsum" id="7QGR"/>
<dbReference type="PDBsum" id="7S1G"/>
<dbReference type="PDBsum" id="7S1H"/>
<dbReference type="PDBsum" id="7S1I"/>
<dbReference type="PDBsum" id="7S1J"/>
<dbReference type="PDBsum" id="7S1K"/>
<dbReference type="PDBsum" id="7SA4"/>
<dbReference type="PDBsum" id="7SS9"/>
<dbReference type="PDBsum" id="7SSD"/>
<dbReference type="PDBsum" id="7SSL"/>
<dbReference type="PDBsum" id="7SSN"/>
<dbReference type="PDBsum" id="7SSO"/>
<dbReference type="PDBsum" id="7SSW"/>
<dbReference type="PDBsum" id="7ST2"/>
<dbReference type="PDBsum" id="7ST6"/>
<dbReference type="PDBsum" id="7ST7"/>
<dbReference type="PDBsum" id="7TOS"/>
<dbReference type="PDBsum" id="7UG7"/>
<dbReference type="PDBsum" id="7UPH"/>
<dbReference type="PDBsum" id="7Y7C"/>
<dbReference type="PDBsum" id="7Y7D"/>
<dbReference type="PDBsum" id="7Y7E"/>
<dbReference type="PDBsum" id="7Y7F"/>
<dbReference type="PDBsum" id="7Y7G"/>
<dbReference type="PDBsum" id="7Y7H"/>
<dbReference type="PDBsum" id="7ZTA"/>
<dbReference type="PDBsum" id="8A3L"/>
<dbReference type="PDBsum" id="8AKN"/>
<dbReference type="PDBsum" id="8AM9"/>
<dbReference type="PDBsum" id="8AYE"/>
<dbReference type="PDBsum" id="8B0X"/>
<dbReference type="PDBsum" id="8B7Y"/>
<dbReference type="PDBsum" id="8BF7"/>
<dbReference type="PDBsum" id="8BGE"/>
<dbReference type="PDBsum" id="8BGH"/>
<dbReference type="PDBsum" id="8BH4"/>
<dbReference type="PDBsum" id="8BHJ"/>
<dbReference type="PDBsum" id="8BHL"/>
<dbReference type="PDBsum" id="8BHN"/>
<dbReference type="PDBsum" id="8BHP"/>
<dbReference type="PDBsum" id="8BIL"/>
<dbReference type="PDBsum" id="8BIM"/>
<dbReference type="PDBsum" id="8CA7"/>
<dbReference type="PDBsum" id="8CAI"/>
<dbReference type="PDBsum" id="8CEP"/>
<dbReference type="PDBsum" id="8CF1"/>
<dbReference type="PDBsum" id="8CGJ"/>
<dbReference type="PDBsum" id="8CGR"/>
<dbReference type="PDBsum" id="8CGU"/>
<dbReference type="PDBsum" id="8EIU"/>
<dbReference type="PDBsum" id="8EKC"/>
<dbReference type="PDBsum" id="8EMM"/>
<dbReference type="PDBsum" id="8EYQ"/>
<dbReference type="PDBsum" id="8EYT"/>
<dbReference type="PDBsum" id="8FIZ"/>
<dbReference type="PDBsum" id="8FTO"/>
<dbReference type="PDBsum" id="8FZD"/>
<dbReference type="PDBsum" id="8FZE"/>
<dbReference type="PDBsum" id="8FZF"/>
<dbReference type="PDBsum" id="8FZG"/>
<dbReference type="PDBsum" id="8FZH"/>
<dbReference type="PDBsum" id="8FZI"/>
<dbReference type="PDBsum" id="8FZJ"/>
<dbReference type="PDBsum" id="8G2U"/>
<dbReference type="PDBsum" id="8G31"/>
<dbReference type="PDBsum" id="8G34"/>
<dbReference type="PDBsum" id="8G38"/>
<dbReference type="PDBsum" id="8G6W"/>
<dbReference type="PDBsum" id="8G7P"/>
<dbReference type="PDBsum" id="8G7Q"/>
<dbReference type="PDBsum" id="8G7R"/>
<dbReference type="PDBsum" id="8G7S"/>
<dbReference type="PDBsum" id="8GHU"/>
<dbReference type="PDBsum" id="8HSP"/>
<dbReference type="PDBsum" id="8HTZ"/>
<dbReference type="PDBsum" id="8HU1"/>
<dbReference type="PDBsum" id="8IFB"/>
<dbReference type="PDBsum" id="8IFC"/>
<dbReference type="PDBsum" id="8JSG"/>
<dbReference type="PDBsum" id="8JSH"/>
<dbReference type="PDBsum" id="8K3O"/>
<dbReference type="PDBsum" id="8K4E"/>
<dbReference type="PDBsum" id="8P16"/>
<dbReference type="PDBsum" id="8P17"/>
<dbReference type="PDBsum" id="8P18"/>
<dbReference type="PDBsum" id="8PEG"/>
<dbReference type="PDBsum" id="8PHJ"/>
<dbReference type="PDBsum" id="8PKL"/>
<dbReference type="PDBsum" id="8PVA"/>
<dbReference type="PDBsum" id="8Q4F"/>
<dbReference type="PDBsum" id="8QBT"/>
<dbReference type="PDBsum" id="8QK7"/>
<dbReference type="PDBsum" id="8QOA"/>
<dbReference type="PDBsum" id="8R3V"/>
<dbReference type="PDBsum" id="8R6C"/>
<dbReference type="PDBsum" id="8R8M"/>
<dbReference type="PDBsum" id="8RCL"/>
<dbReference type="PDBsum" id="8RCM"/>
<dbReference type="PDBsum" id="8RCS"/>
<dbReference type="PDBsum" id="8RCT"/>
<dbReference type="PDBsum" id="8SYL"/>
<dbReference type="PDBsum" id="8T5D"/>
<dbReference type="PDBsum" id="8T5H"/>
<dbReference type="PDBsum" id="8UPO"/>
<dbReference type="PDBsum" id="8UPR"/>
<dbReference type="PDBsum" id="8UQL"/>
<dbReference type="PDBsum" id="8UQM"/>
<dbReference type="PDBsum" id="8UQP"/>
<dbReference type="PDBsum" id="8UR0"/>
<dbReference type="PDBsum" id="8URH"/>
<dbReference type="PDBsum" id="8URI"/>
<dbReference type="PDBsum" id="8URX"/>
<dbReference type="PDBsum" id="8URY"/>
<dbReference type="PDBsum" id="8VS9"/>
<dbReference type="PDBsum" id="8VSA"/>
<dbReference type="PDBsum" id="8YUO"/>
<dbReference type="PDBsum" id="8YUP"/>
<dbReference type="PDBsum" id="8YUQ"/>
<dbReference type="PDBsum" id="8YUR"/>
<dbReference type="PDBsum" id="8YUS"/>
<dbReference type="PDBsum" id="9AX7"/>
<dbReference type="PDBsum" id="9CG5"/>
<dbReference type="PDBsum" id="9CG6"/>
<dbReference type="PDBsum" id="9CG7"/>
<dbReference type="PDBsum" id="9DUK"/>
<dbReference type="PDBsum" id="9DUL"/>
<dbReference type="PDBsum" id="9FBV"/>
<dbReference type="PDBsum" id="9GFT"/>
<dbReference type="PDBsum" id="9GGR"/>
<dbReference type="PDBsum" id="9GUP"/>
<dbReference type="PDBsum" id="9GUQ"/>
<dbReference type="PDBsum" id="9GUS"/>
<dbReference type="PDBsum" id="9GUT"/>
<dbReference type="PDBsum" id="9GUU"/>
<dbReference type="PDBsum" id="9GUW"/>
<dbReference type="PDBsum" id="9GUX"/>
<dbReference type="PDBsum" id="9MOR"/>
<dbReference type="PDBsum" id="9MQ4"/>
<dbReference type="EMDB" id="EMD-0076"/>
<dbReference type="EMDB" id="EMD-0080"/>
<dbReference type="EMDB" id="EMD-0081"/>
<dbReference type="EMDB" id="EMD-0082"/>
<dbReference type="EMDB" id="EMD-0083"/>
<dbReference type="EMDB" id="EMD-0137"/>
<dbReference type="EMDB" id="EMD-0139"/>
<dbReference type="EMDB" id="EMD-0261"/>
<dbReference type="EMDB" id="EMD-10353"/>
<dbReference type="EMDB" id="EMD-10453"/>
<dbReference type="EMDB" id="EMD-10458"/>
<dbReference type="EMDB" id="EMD-10656"/>
<dbReference type="EMDB" id="EMD-10657"/>
<dbReference type="EMDB" id="EMD-10705"/>
<dbReference type="EMDB" id="EMD-11419"/>
<dbReference type="EMDB" id="EMD-11710"/>
<dbReference type="EMDB" id="EMD-11713"/>
<dbReference type="EMDB" id="EMD-11717"/>
<dbReference type="EMDB" id="EMD-11718"/>
<dbReference type="EMDB" id="EMD-12035"/>
<dbReference type="EMDB" id="EMD-12239"/>
<dbReference type="EMDB" id="EMD-12240"/>
<dbReference type="EMDB" id="EMD-12241"/>
<dbReference type="EMDB" id="EMD-12242"/>
<dbReference type="EMDB" id="EMD-12243"/>
<dbReference type="EMDB" id="EMD-12244"/>
<dbReference type="EMDB" id="EMD-12245"/>
<dbReference type="EMDB" id="EMD-12246"/>
<dbReference type="EMDB" id="EMD-12247"/>
<dbReference type="EMDB" id="EMD-12248"/>
<dbReference type="EMDB" id="EMD-12249"/>
<dbReference type="EMDB" id="EMD-12261"/>
<dbReference type="EMDB" id="EMD-12693"/>
<dbReference type="EMDB" id="EMD-12694"/>
<dbReference type="EMDB" id="EMD-12695"/>
<dbReference type="EMDB" id="EMD-12936"/>
<dbReference type="EMDB" id="EMD-12937"/>
<dbReference type="EMDB" id="EMD-13180"/>
<dbReference type="EMDB" id="EMD-13461"/>
<dbReference type="EMDB" id="EMD-13464"/>
<dbReference type="EMDB" id="EMD-13952"/>
<dbReference type="EMDB" id="EMD-13955"/>
<dbReference type="EMDB" id="EMD-14956"/>
<dbReference type="EMDB" id="EMD-15116"/>
<dbReference type="EMDB" id="EMD-15712"/>
<dbReference type="EMDB" id="EMD-15793"/>
<dbReference type="EMDB" id="EMD-15905"/>
<dbReference type="EMDB" id="EMD-16015"/>
<dbReference type="EMDB" id="EMD-16029"/>
<dbReference type="EMDB" id="EMD-16031"/>
<dbReference type="EMDB" id="EMD-16047"/>
<dbReference type="EMDB" id="EMD-16057"/>
<dbReference type="EMDB" id="EMD-16059"/>
<dbReference type="EMDB" id="EMD-16062"/>
<dbReference type="EMDB" id="EMD-16065"/>
<dbReference type="EMDB" id="EMD-16081"/>
<dbReference type="EMDB" id="EMD-16082"/>
<dbReference type="EMDB" id="EMD-16520"/>
<dbReference type="EMDB" id="EMD-16526"/>
<dbReference type="EMDB" id="EMD-16612"/>
<dbReference type="EMDB" id="EMD-16615"/>
<dbReference type="EMDB" id="EMD-16645"/>
<dbReference type="EMDB" id="EMD-16650"/>
<dbReference type="EMDB" id="EMD-16651"/>
<dbReference type="EMDB" id="EMD-17346"/>
<dbReference type="EMDB" id="EMD-17347"/>
<dbReference type="EMDB" id="EMD-17348"/>
<dbReference type="EMDB" id="EMD-17631"/>
<dbReference type="EMDB" id="EMD-17667"/>
<dbReference type="EMDB" id="EMD-17743"/>
<dbReference type="EMDB" id="EMD-17959"/>
<dbReference type="EMDB" id="EMD-18145"/>
<dbReference type="EMDB" id="EMD-18320"/>
<dbReference type="EMDB" id="EMD-18458"/>
<dbReference type="EMDB" id="EMD-18534"/>
<dbReference type="EMDB" id="EMD-18875"/>
<dbReference type="EMDB" id="EMD-18950"/>
<dbReference type="EMDB" id="EMD-19004"/>
<dbReference type="EMDB" id="EMD-19054"/>
<dbReference type="EMDB" id="EMD-19055"/>
<dbReference type="EMDB" id="EMD-19058"/>
<dbReference type="EMDB" id="EMD-19059"/>
<dbReference type="EMDB" id="EMD-20048"/>
<dbReference type="EMDB" id="EMD-20052"/>
<dbReference type="EMDB" id="EMD-21420"/>
<dbReference type="EMDB" id="EMD-21421"/>
<dbReference type="EMDB" id="EMD-21422"/>
<dbReference type="EMDB" id="EMD-21558"/>
<dbReference type="EMDB" id="EMD-21569"/>
<dbReference type="EMDB" id="EMD-21571"/>
<dbReference type="EMDB" id="EMD-21572"/>
<dbReference type="EMDB" id="EMD-21573"/>
<dbReference type="EMDB" id="EMD-21620"/>
<dbReference type="EMDB" id="EMD-21625"/>
<dbReference type="EMDB" id="EMD-21630"/>
<dbReference type="EMDB" id="EMD-21631"/>
<dbReference type="EMDB" id="EMD-21632"/>
<dbReference type="EMDB" id="EMD-21633"/>
<dbReference type="EMDB" id="EMD-21634"/>
<dbReference type="EMDB" id="EMD-21635"/>
<dbReference type="EMDB" id="EMD-21636"/>
<dbReference type="EMDB" id="EMD-21637"/>
<dbReference type="EMDB" id="EMD-21638"/>
<dbReference type="EMDB" id="EMD-21639"/>
<dbReference type="EMDB" id="EMD-21640"/>
<dbReference type="EMDB" id="EMD-21641"/>
<dbReference type="EMDB" id="EMD-21857"/>
<dbReference type="EMDB" id="EMD-21858"/>
<dbReference type="EMDB" id="EMD-22143"/>
<dbReference type="EMDB" id="EMD-22459"/>
<dbReference type="EMDB" id="EMD-22461"/>
<dbReference type="EMDB" id="EMD-22464"/>
<dbReference type="EMDB" id="EMD-22466"/>
<dbReference type="EMDB" id="EMD-22469"/>
<dbReference type="EMDB" id="EMD-22472"/>
<dbReference type="EMDB" id="EMD-22669"/>
<dbReference type="EMDB" id="EMD-22670"/>
<dbReference type="EMDB" id="EMD-22671"/>
<dbReference type="EMDB" id="EMD-22672"/>
<dbReference type="EMDB" id="EMD-22673"/>
<dbReference type="EMDB" id="EMD-22674"/>
<dbReference type="EMDB" id="EMD-23528"/>
<dbReference type="EMDB" id="EMD-24120"/>
<dbReference type="EMDB" id="EMD-24132"/>
<dbReference type="EMDB" id="EMD-24133"/>
<dbReference type="EMDB" id="EMD-24134"/>
<dbReference type="EMDB" id="EMD-24135"/>
<dbReference type="EMDB" id="EMD-24136"/>
<dbReference type="EMDB" id="EMD-24802"/>
<dbReference type="EMDB" id="EMD-24803"/>
<dbReference type="EMDB" id="EMD-24804"/>
<dbReference type="EMDB" id="EMD-25405"/>
<dbReference type="EMDB" id="EMD-25407"/>
<dbReference type="EMDB" id="EMD-25409"/>
<dbReference type="EMDB" id="EMD-25410"/>
<dbReference type="EMDB" id="EMD-25411"/>
<dbReference type="EMDB" id="EMD-25415"/>
<dbReference type="EMDB" id="EMD-25418"/>
<dbReference type="EMDB" id="EMD-25420"/>
<dbReference type="EMDB" id="EMD-25421"/>
<dbReference type="EMDB" id="EMD-26486"/>
<dbReference type="EMDB" id="EMD-28165"/>
<dbReference type="EMDB" id="EMD-28197"/>
<dbReference type="EMDB" id="EMD-28254"/>
<dbReference type="EMDB" id="EMD-28692"/>
<dbReference type="EMDB" id="EMD-28720"/>
<dbReference type="EMDB" id="EMD-29214"/>
<dbReference type="EMDB" id="EMD-29449"/>
<dbReference type="EMDB" id="EMD-29620"/>
<dbReference type="EMDB" id="EMD-29621"/>
<dbReference type="EMDB" id="EMD-29624"/>
<dbReference type="EMDB" id="EMD-29627"/>
<dbReference type="EMDB" id="EMD-29628"/>
<dbReference type="EMDB" id="EMD-29631"/>
<dbReference type="EMDB" id="EMD-29634"/>
<dbReference type="EMDB" id="EMD-29786"/>
<dbReference type="EMDB" id="EMD-29819"/>
<dbReference type="EMDB" id="EMD-29820"/>
<dbReference type="EMDB" id="EMD-29821"/>
<dbReference type="EMDB" id="EMD-29822"/>
<dbReference type="EMDB" id="EMD-30598"/>
<dbReference type="EMDB" id="EMD-30611"/>
<dbReference type="EMDB" id="EMD-33660"/>
<dbReference type="EMDB" id="EMD-33661"/>
<dbReference type="EMDB" id="EMD-33662"/>
<dbReference type="EMDB" id="EMD-33663"/>
<dbReference type="EMDB" id="EMD-33664"/>
<dbReference type="EMDB" id="EMD-33665"/>
<dbReference type="EMDB" id="EMD-3489"/>
<dbReference type="EMDB" id="EMD-3490"/>
<dbReference type="EMDB" id="EMD-3492"/>
<dbReference type="EMDB" id="EMD-3493"/>
<dbReference type="EMDB" id="EMD-3494"/>
<dbReference type="EMDB" id="EMD-3495"/>
<dbReference type="EMDB" id="EMD-35001"/>
<dbReference type="EMDB" id="EMD-35020"/>
<dbReference type="EMDB" id="EMD-35022"/>
<dbReference type="EMDB" id="EMD-3508"/>
<dbReference type="EMDB" id="EMD-35411"/>
<dbReference type="EMDB" id="EMD-35412"/>
<dbReference type="EMDB" id="EMD-3580"/>
<dbReference type="EMDB" id="EMD-3661"/>
<dbReference type="EMDB" id="EMD-36619"/>
<dbReference type="EMDB" id="EMD-3662"/>
<dbReference type="EMDB" id="EMD-36620"/>
<dbReference type="EMDB" id="EMD-3663"/>
<dbReference type="EMDB" id="EMD-36854"/>
<dbReference type="EMDB" id="EMD-36883"/>
<dbReference type="EMDB" id="EMD-3713"/>
<dbReference type="EMDB" id="EMD-3730"/>
<dbReference type="EMDB" id="EMD-3898"/>
<dbReference type="EMDB" id="EMD-3899"/>
<dbReference type="EMDB" id="EMD-3903"/>
<dbReference type="EMDB" id="EMD-39577"/>
<dbReference type="EMDB" id="EMD-39578"/>
<dbReference type="EMDB" id="EMD-39579"/>
<dbReference type="EMDB" id="EMD-39580"/>
<dbReference type="EMDB" id="EMD-39581"/>
<dbReference type="EMDB" id="EMD-4001"/>
<dbReference type="EMDB" id="EMD-40882"/>
<dbReference type="EMDB" id="EMD-4121"/>
<dbReference type="EMDB" id="EMD-4122"/>
<dbReference type="EMDB" id="EMD-4123"/>
<dbReference type="EMDB" id="EMD-4124"/>
<dbReference type="EMDB" id="EMD-4125"/>
<dbReference type="EMDB" id="EMD-4126"/>
<dbReference type="EMDB" id="EMD-42453"/>
<dbReference type="EMDB" id="EMD-42454"/>
<dbReference type="EMDB" id="EMD-42473"/>
<dbReference type="EMDB" id="EMD-42474"/>
<dbReference type="EMDB" id="EMD-42477"/>
<dbReference type="EMDB" id="EMD-42479"/>
<dbReference type="EMDB" id="EMD-42492"/>
<dbReference type="EMDB" id="EMD-42493"/>
<dbReference type="EMDB" id="EMD-42503"/>
<dbReference type="EMDB" id="EMD-42504"/>
<dbReference type="EMDB" id="EMD-43490"/>
<dbReference type="EMDB" id="EMD-43491"/>
<dbReference type="EMDB" id="EMD-43929"/>
<dbReference type="EMDB" id="EMD-4476"/>
<dbReference type="EMDB" id="EMD-4477"/>
<dbReference type="EMDB" id="EMD-4478"/>
<dbReference type="EMDB" id="EMD-45569"/>
<dbReference type="EMDB" id="EMD-45572"/>
<dbReference type="EMDB" id="EMD-45573"/>
<dbReference type="EMDB" id="EMD-47168"/>
<dbReference type="EMDB" id="EMD-47169"/>
<dbReference type="EMDB" id="EMD-48479"/>
<dbReference type="EMDB" id="EMD-48513"/>
<dbReference type="EMDB" id="EMD-50296"/>
<dbReference type="EMDB" id="EMD-51318"/>
<dbReference type="EMDB" id="EMD-51340"/>
<dbReference type="EMDB" id="EMD-51615"/>
<dbReference type="EMDB" id="EMD-51616"/>
<dbReference type="EMDB" id="EMD-51618"/>
<dbReference type="EMDB" id="EMD-51619"/>
<dbReference type="EMDB" id="EMD-51620"/>
<dbReference type="EMDB" id="EMD-51622"/>
<dbReference type="EMDB" id="EMD-51623"/>
<dbReference type="EMDB" id="EMD-6667"/>
<dbReference type="EMDB" id="EMD-7289"/>
<dbReference type="EMDB" id="EMD-7341"/>
<dbReference type="EMDB" id="EMD-7970"/>
<dbReference type="EMDB" id="EMD-8107"/>
<dbReference type="EMDB" id="EMD-8175"/>
<dbReference type="EMDB" id="EMD-8176"/>
<dbReference type="EMDB" id="EMD-8237"/>
<dbReference type="EMDB" id="EMD-8238"/>
<dbReference type="EMDB" id="EMD-8279"/>
<dbReference type="EMDB" id="EMD-8280"/>
<dbReference type="EMDB" id="EMD-8281"/>
<dbReference type="EMDB" id="EMD-8282"/>
<dbReference type="EMDB" id="EMD-8505"/>
<dbReference type="EMDB" id="EMD-8506"/>
<dbReference type="EMDB" id="EMD-8615"/>
<dbReference type="EMDB" id="EMD-8616"/>
<dbReference type="EMDB" id="EMD-8617"/>
<dbReference type="EMDB" id="EMD-8618"/>
<dbReference type="EMDB" id="EMD-8619"/>
<dbReference type="EMDB" id="EMD-8620"/>
<dbReference type="EMDB" id="EMD-8813"/>
<dbReference type="EMDB" id="EMD-8814"/>
<dbReference type="EMDB" id="EMD-8815"/>
<dbReference type="EMDB" id="EMD-8828"/>
<dbReference type="SMR" id="P0A7W1"/>
<dbReference type="BioGRID" id="4263408">
    <property type="interactions" value="235"/>
</dbReference>
<dbReference type="BioGRID" id="852107">
    <property type="interactions" value="7"/>
</dbReference>
<dbReference type="ComplexPortal" id="CPX-3802">
    <property type="entry name" value="30S small ribosomal subunit"/>
</dbReference>
<dbReference type="DIP" id="DIP-10781N"/>
<dbReference type="FunCoup" id="P0A7W1">
    <property type="interactions" value="1369"/>
</dbReference>
<dbReference type="IntAct" id="P0A7W1">
    <property type="interactions" value="203"/>
</dbReference>
<dbReference type="MINT" id="P0A7W1"/>
<dbReference type="STRING" id="511145.b3303"/>
<dbReference type="iPTMnet" id="P0A7W1"/>
<dbReference type="jPOST" id="P0A7W1"/>
<dbReference type="PaxDb" id="511145-b3303"/>
<dbReference type="EnsemblBacteria" id="AAC76328">
    <property type="protein sequence ID" value="AAC76328"/>
    <property type="gene ID" value="b3303"/>
</dbReference>
<dbReference type="GeneID" id="93778684"/>
<dbReference type="GeneID" id="947795"/>
<dbReference type="KEGG" id="ecj:JW3265"/>
<dbReference type="KEGG" id="eco:b3303"/>
<dbReference type="KEGG" id="ecoc:C3026_17955"/>
<dbReference type="PATRIC" id="fig|1411691.4.peg.3428"/>
<dbReference type="EchoBASE" id="EB0897"/>
<dbReference type="eggNOG" id="COG0098">
    <property type="taxonomic scope" value="Bacteria"/>
</dbReference>
<dbReference type="HOGENOM" id="CLU_065898_2_2_6"/>
<dbReference type="InParanoid" id="P0A7W1"/>
<dbReference type="OMA" id="GIKDVWT"/>
<dbReference type="OrthoDB" id="9809045at2"/>
<dbReference type="PhylomeDB" id="P0A7W1"/>
<dbReference type="BioCyc" id="EcoCyc:EG10904-MONOMER"/>
<dbReference type="BioCyc" id="MetaCyc:EG10904-MONOMER"/>
<dbReference type="EvolutionaryTrace" id="P0A7W1"/>
<dbReference type="PRO" id="PR:P0A7W1"/>
<dbReference type="Proteomes" id="UP000000625">
    <property type="component" value="Chromosome"/>
</dbReference>
<dbReference type="GO" id="GO:0005737">
    <property type="term" value="C:cytoplasm"/>
    <property type="evidence" value="ECO:0000314"/>
    <property type="project" value="ComplexPortal"/>
</dbReference>
<dbReference type="GO" id="GO:0005829">
    <property type="term" value="C:cytosol"/>
    <property type="evidence" value="ECO:0000314"/>
    <property type="project" value="EcoCyc"/>
</dbReference>
<dbReference type="GO" id="GO:0022627">
    <property type="term" value="C:cytosolic small ribosomal subunit"/>
    <property type="evidence" value="ECO:0000314"/>
    <property type="project" value="CAFA"/>
</dbReference>
<dbReference type="GO" id="GO:0019843">
    <property type="term" value="F:rRNA binding"/>
    <property type="evidence" value="ECO:0007669"/>
    <property type="project" value="UniProtKB-UniRule"/>
</dbReference>
<dbReference type="GO" id="GO:0003735">
    <property type="term" value="F:structural constituent of ribosome"/>
    <property type="evidence" value="ECO:0000314"/>
    <property type="project" value="CAFA"/>
</dbReference>
<dbReference type="GO" id="GO:0002181">
    <property type="term" value="P:cytoplasmic translation"/>
    <property type="evidence" value="ECO:0000303"/>
    <property type="project" value="ComplexPortal"/>
</dbReference>
<dbReference type="GO" id="GO:1990145">
    <property type="term" value="P:maintenance of translational fidelity"/>
    <property type="evidence" value="ECO:0000315"/>
    <property type="project" value="EcoCyc"/>
</dbReference>
<dbReference type="GO" id="GO:0046677">
    <property type="term" value="P:response to antibiotic"/>
    <property type="evidence" value="ECO:0007669"/>
    <property type="project" value="UniProtKB-KW"/>
</dbReference>
<dbReference type="GO" id="GO:0000028">
    <property type="term" value="P:ribosomal small subunit assembly"/>
    <property type="evidence" value="ECO:0000314"/>
    <property type="project" value="CAFA"/>
</dbReference>
<dbReference type="GO" id="GO:0006412">
    <property type="term" value="P:translation"/>
    <property type="evidence" value="ECO:0000318"/>
    <property type="project" value="GO_Central"/>
</dbReference>
<dbReference type="FunFam" id="3.30.160.20:FF:000001">
    <property type="entry name" value="30S ribosomal protein S5"/>
    <property type="match status" value="1"/>
</dbReference>
<dbReference type="FunFam" id="3.30.230.10:FF:000002">
    <property type="entry name" value="30S ribosomal protein S5"/>
    <property type="match status" value="1"/>
</dbReference>
<dbReference type="Gene3D" id="3.30.160.20">
    <property type="match status" value="1"/>
</dbReference>
<dbReference type="Gene3D" id="3.30.230.10">
    <property type="match status" value="1"/>
</dbReference>
<dbReference type="HAMAP" id="MF_01307_B">
    <property type="entry name" value="Ribosomal_uS5_B"/>
    <property type="match status" value="1"/>
</dbReference>
<dbReference type="InterPro" id="IPR020568">
    <property type="entry name" value="Ribosomal_Su5_D2-typ_SF"/>
</dbReference>
<dbReference type="InterPro" id="IPR000851">
    <property type="entry name" value="Ribosomal_uS5"/>
</dbReference>
<dbReference type="InterPro" id="IPR005712">
    <property type="entry name" value="Ribosomal_uS5_bac-type"/>
</dbReference>
<dbReference type="InterPro" id="IPR005324">
    <property type="entry name" value="Ribosomal_uS5_C"/>
</dbReference>
<dbReference type="InterPro" id="IPR013810">
    <property type="entry name" value="Ribosomal_uS5_N"/>
</dbReference>
<dbReference type="InterPro" id="IPR018192">
    <property type="entry name" value="Ribosomal_uS5_N_CS"/>
</dbReference>
<dbReference type="InterPro" id="IPR014721">
    <property type="entry name" value="Ribsml_uS5_D2-typ_fold_subgr"/>
</dbReference>
<dbReference type="NCBIfam" id="TIGR01021">
    <property type="entry name" value="rpsE_bact"/>
    <property type="match status" value="1"/>
</dbReference>
<dbReference type="PANTHER" id="PTHR48277">
    <property type="entry name" value="MITOCHONDRIAL RIBOSOMAL PROTEIN S5"/>
    <property type="match status" value="1"/>
</dbReference>
<dbReference type="PANTHER" id="PTHR48277:SF1">
    <property type="entry name" value="MITOCHONDRIAL RIBOSOMAL PROTEIN S5"/>
    <property type="match status" value="1"/>
</dbReference>
<dbReference type="Pfam" id="PF00333">
    <property type="entry name" value="Ribosomal_S5"/>
    <property type="match status" value="1"/>
</dbReference>
<dbReference type="Pfam" id="PF03719">
    <property type="entry name" value="Ribosomal_S5_C"/>
    <property type="match status" value="1"/>
</dbReference>
<dbReference type="SUPFAM" id="SSF54768">
    <property type="entry name" value="dsRNA-binding domain-like"/>
    <property type="match status" value="1"/>
</dbReference>
<dbReference type="SUPFAM" id="SSF54211">
    <property type="entry name" value="Ribosomal protein S5 domain 2-like"/>
    <property type="match status" value="1"/>
</dbReference>
<dbReference type="PROSITE" id="PS00585">
    <property type="entry name" value="RIBOSOMAL_S5"/>
    <property type="match status" value="1"/>
</dbReference>
<dbReference type="PROSITE" id="PS50881">
    <property type="entry name" value="S5_DSRBD"/>
    <property type="match status" value="1"/>
</dbReference>
<reference key="1">
    <citation type="journal article" date="1983" name="Nucleic Acids Res.">
        <title>The spc ribosomal protein operon of Escherichia coli: sequence and cotranscription of the ribosomal protein genes and a protein export gene.</title>
        <authorList>
            <person name="Cerretti D.P."/>
            <person name="Dean D."/>
            <person name="Davis G.R."/>
            <person name="Bedwell D.M."/>
            <person name="Nomura M."/>
        </authorList>
    </citation>
    <scope>NUCLEOTIDE SEQUENCE [GENOMIC DNA]</scope>
    <source>
        <strain>K12</strain>
    </source>
</reference>
<reference key="2">
    <citation type="journal article" date="1997" name="Science">
        <title>The complete genome sequence of Escherichia coli K-12.</title>
        <authorList>
            <person name="Blattner F.R."/>
            <person name="Plunkett G. III"/>
            <person name="Bloch C.A."/>
            <person name="Perna N.T."/>
            <person name="Burland V."/>
            <person name="Riley M."/>
            <person name="Collado-Vides J."/>
            <person name="Glasner J.D."/>
            <person name="Rode C.K."/>
            <person name="Mayhew G.F."/>
            <person name="Gregor J."/>
            <person name="Davis N.W."/>
            <person name="Kirkpatrick H.A."/>
            <person name="Goeden M.A."/>
            <person name="Rose D.J."/>
            <person name="Mau B."/>
            <person name="Shao Y."/>
        </authorList>
    </citation>
    <scope>NUCLEOTIDE SEQUENCE [LARGE SCALE GENOMIC DNA]</scope>
    <source>
        <strain>K12 / MG1655 / ATCC 47076</strain>
    </source>
</reference>
<reference key="3">
    <citation type="journal article" date="2006" name="Mol. Syst. Biol.">
        <title>Highly accurate genome sequences of Escherichia coli K-12 strains MG1655 and W3110.</title>
        <authorList>
            <person name="Hayashi K."/>
            <person name="Morooka N."/>
            <person name="Yamamoto Y."/>
            <person name="Fujita K."/>
            <person name="Isono K."/>
            <person name="Choi S."/>
            <person name="Ohtsubo E."/>
            <person name="Baba T."/>
            <person name="Wanner B.L."/>
            <person name="Mori H."/>
            <person name="Horiuchi T."/>
        </authorList>
    </citation>
    <scope>NUCLEOTIDE SEQUENCE [LARGE SCALE GENOMIC DNA]</scope>
    <source>
        <strain>K12 / W3110 / ATCC 27325 / DSM 5911</strain>
    </source>
</reference>
<reference key="4">
    <citation type="journal article" date="1978" name="FEBS Lett.">
        <title>The primary structure of protein S5 from the small subunit of the Escherichia coli ribosome.</title>
        <authorList>
            <person name="Wittmann-Liebold B."/>
            <person name="Greuer B."/>
        </authorList>
    </citation>
    <scope>PROTEIN SEQUENCE OF 2-167</scope>
    <scope>SUBUNIT</scope>
    <scope>ACETYLATION AT ALA-2</scope>
    <scope>VARIANTS</scope>
    <scope>MUTANTS</scope>
    <source>
        <strain>B</strain>
        <strain>K</strain>
    </source>
</reference>
<reference key="5">
    <citation type="journal article" date="1973" name="Mol. Gen. Genet.">
        <title>Localization of the amino-acid exchange in protein S5 from an Escherichia coli mutant resistant to spectinomycin.</title>
        <authorList>
            <person name="DeWilde M."/>
            <person name="Wittmann-Liebold B."/>
        </authorList>
    </citation>
    <scope>PROTEIN SEQUENCE OF 15-23</scope>
    <scope>SUBUNIT</scope>
    <scope>SPECTINOMYCIN RESISTANT STRAIN</scope>
    <source>
        <strain>B</strain>
    </source>
</reference>
<reference key="6">
    <citation type="journal article" date="1973" name="Proc. Natl. Acad. Sci. U.S.A.">
        <title>Requirement of proteins S5 and S9 from 30S subunits for the ribosome-dependent GTPase activity of elongation factor G.</title>
        <authorList>
            <person name="Marsh R.C."/>
            <person name="Parmeggiani A."/>
        </authorList>
    </citation>
    <scope>INVOLVEMENT IN FORMATION OF THE EF-G/RIBOSOME COMPLEX</scope>
    <source>
        <strain>B/2</strain>
    </source>
</reference>
<reference key="7">
    <citation type="journal article" date="1997" name="Electrophoresis">
        <title>Escherichia coli proteome analysis using the gene-protein database.</title>
        <authorList>
            <person name="VanBogelen R.A."/>
            <person name="Abshire K.Z."/>
            <person name="Moldover B."/>
            <person name="Olson E.R."/>
            <person name="Neidhardt F.C."/>
        </authorList>
    </citation>
    <scope>IDENTIFICATION BY 2D-GEL</scope>
</reference>
<reference key="8">
    <citation type="journal article" date="2014" name="Curr. Opin. Struct. Biol.">
        <title>A new system for naming ribosomal proteins.</title>
        <authorList>
            <person name="Ban N."/>
            <person name="Beckmann R."/>
            <person name="Cate J.H.D."/>
            <person name="Dinman J.D."/>
            <person name="Dragon F."/>
            <person name="Ellis S.R."/>
            <person name="Lafontaine D.L.J."/>
            <person name="Lindahl L."/>
            <person name="Liljas A."/>
            <person name="Lipton J.M."/>
            <person name="McAlear M.A."/>
            <person name="Moore P.B."/>
            <person name="Noller H.F."/>
            <person name="Ortega J."/>
            <person name="Panse V.G."/>
            <person name="Ramakrishnan V."/>
            <person name="Spahn C.M.T."/>
            <person name="Steitz T.A."/>
            <person name="Tchorzewski M."/>
            <person name="Tollervey D."/>
            <person name="Warren A.J."/>
            <person name="Williamson J.R."/>
            <person name="Wilson D."/>
            <person name="Yonath A."/>
            <person name="Yusupov M."/>
        </authorList>
    </citation>
    <scope>NOMENCLATURE</scope>
</reference>
<reference key="9">
    <citation type="journal article" date="1990" name="EMBO J.">
        <title>Ribosomal RNA and protein mutants resistant to spectinomycin.</title>
        <authorList>
            <person name="Bilgin N."/>
            <person name="Richter A.A."/>
            <person name="Ehrenberg M."/>
            <person name="Dahlberg A.E."/>
            <person name="Kurland C.G."/>
        </authorList>
    </citation>
    <scope>CHARACTERIZATION OF VARIANTS</scope>
    <source>
        <strain>O17</strain>
    </source>
</reference>
<reference key="10">
    <citation type="journal article" date="1991" name="EMBO J.">
        <title>The path of mRNA through the Escherichia coli ribosome; site-directed cross-linking of mRNA analogues carrying a photo-reactive label at various points 3' to the decoding site.</title>
        <authorList>
            <person name="Rinke-Appel J."/>
            <person name="Juenke N."/>
            <person name="Stade K."/>
            <person name="Brimacombe R."/>
        </authorList>
    </citation>
    <scope>CROSS-LINKING TO MRNA</scope>
</reference>
<reference key="11">
    <citation type="journal article" date="2005" name="Cell">
        <title>mRNA helicase activity of the ribosome.</title>
        <authorList>
            <person name="Takyar S."/>
            <person name="Hickerson R.P."/>
            <person name="Noller H.F."/>
        </authorList>
    </citation>
    <scope>ROLE IN MRNA HELICASE ACTIVITY</scope>
    <scope>MUTAGENESIS</scope>
    <source>
        <strain>MRE-600</strain>
    </source>
</reference>
<reference key="12">
    <citation type="journal article" date="1999" name="Anal. Biochem.">
        <title>Observation of Escherichia coli ribosomal proteins and their posttranslational modifications by mass spectrometry.</title>
        <authorList>
            <person name="Arnold R.J."/>
            <person name="Reilly J.P."/>
        </authorList>
    </citation>
    <scope>MASS SPECTROMETRY</scope>
    <scope>SUBUNIT</scope>
    <source>
        <strain>K12 / ATCC 25404 / DSM 5698 / NCIMB 11290</strain>
    </source>
</reference>
<reference key="13">
    <citation type="book" date="1996" name="Escherichia coli and Salmonella: Cellular and molecular biology (2nd ed.)">
        <title>Limitations of translational accuracy.</title>
        <editorList>
            <person name="Neidhardt F.C."/>
            <person name="Curtiss R. III"/>
            <person name="Ingraham J.L."/>
            <person name="Lin E.C.C."/>
            <person name="Low K.B. Magasanik B."/>
            <person name="Reznikoff W.S."/>
            <person name="Riley M."/>
            <person name="Schaechter M."/>
            <person name="Umbarger H.E."/>
        </editorList>
        <authorList>
            <person name="Kurland C.G."/>
            <person name="Hughes D."/>
            <person name="Ehrenberg M."/>
        </authorList>
    </citation>
    <scope>REVIEW ON TRANSLATIONAL ACCURACY</scope>
</reference>
<reference key="14">
    <citation type="journal article" date="2002" name="Nat. Struct. Biol.">
        <title>All-atom homology model of the Escherichia coli 30S ribosomal subunit.</title>
        <authorList>
            <person name="Tung C.-S."/>
            <person name="Joseph S."/>
            <person name="Sanbonmatsu K.Y."/>
        </authorList>
    </citation>
    <scope>3D-STRUCTURE MODELING</scope>
    <scope>SUBUNIT</scope>
</reference>
<reference key="15">
    <citation type="journal article" date="2003" name="Cell">
        <title>Study of the structural dynamics of the E. coli 70S ribosome using real-space refinement.</title>
        <authorList>
            <person name="Gao H."/>
            <person name="Sengupta J."/>
            <person name="Valle M."/>
            <person name="Korostelev A."/>
            <person name="Eswar N."/>
            <person name="Stagg S.M."/>
            <person name="Van Roey P."/>
            <person name="Agrawal R.K."/>
            <person name="Harvey S.C."/>
            <person name="Sali A."/>
            <person name="Chapman M.S."/>
            <person name="Frank J."/>
        </authorList>
    </citation>
    <scope>STRUCTURE BY ELECTRON MICROSCOPY (11.50 ANGSTROMS)</scope>
    <scope>SUBUNIT</scope>
    <source>
        <strain>MRE-600</strain>
    </source>
</reference>
<reference key="16">
    <citation type="journal article" date="2005" name="Science">
        <title>Structures of the bacterial ribosome at 3.5 A resolution.</title>
        <authorList>
            <person name="Schuwirth B.S."/>
            <person name="Borovinskaya M.A."/>
            <person name="Hau C.W."/>
            <person name="Zhang W."/>
            <person name="Vila-Sanjurjo A."/>
            <person name="Holton J.M."/>
            <person name="Cate J.H.D."/>
        </authorList>
    </citation>
    <scope>X-RAY CRYSTALLOGRAPHY (3.46 ANGSTROMS) OF 2 DIFFERENT RIBOSOME STRUCTURES</scope>
    <scope>SUBUNIT</scope>
    <source>
        <strain>MRE-600</strain>
    </source>
</reference>
<reference key="17">
    <citation type="journal article" date="2017" name="Nature">
        <title>Mechanistic insights into the alternative translation termination by ArfA and RF2.</title>
        <authorList>
            <person name="Ma C."/>
            <person name="Kurita D."/>
            <person name="Li N."/>
            <person name="Chen Y."/>
            <person name="Himeno H."/>
            <person name="Gao N."/>
        </authorList>
    </citation>
    <scope>STRUCTURE BY ELECTRON MICROSCOPY (3.0 ANGSTROMS) OF 70S RIBOSOME IN COMPLEX WITH ARFA AND RF2</scope>
    <scope>SUBUNIT</scope>
</reference>
<reference key="18">
    <citation type="journal article" date="2017" name="Nature">
        <title>Structural basis for ArfA-RF2-mediated translation termination on mRNAs lacking stop codons.</title>
        <authorList>
            <person name="Huter P."/>
            <person name="Mueller C."/>
            <person name="Beckert B."/>
            <person name="Arenz S."/>
            <person name="Berninghausen O."/>
            <person name="Beckmann R."/>
            <person name="Wilson D.N."/>
        </authorList>
    </citation>
    <scope>STRUCTURE BY ELECTRON MICROSCOPY (3.1 ANGSTROMS) OF 70S RIBOSOME IN COMPLEX WITH ARFA AND RF2</scope>
    <scope>SUBUNIT</scope>
</reference>
<reference key="19">
    <citation type="journal article" date="2016" name="Science">
        <title>Translational termination without a stop codon.</title>
        <authorList>
            <person name="James N.R."/>
            <person name="Brown A."/>
            <person name="Gordiyenko Y."/>
            <person name="Ramakrishnan V."/>
        </authorList>
    </citation>
    <scope>STRUCTURE BY ELECTRON MICROSCOPY (2.97 ANGSTROMS) OF 70S RIBOSOME IN COMPLEX WITH ARFA AND RF2</scope>
    <scope>SUBUNIT</scope>
</reference>
<reference key="20">
    <citation type="journal article" date="2017" name="Nature">
        <title>Structural basis of co-translational quality control by ArfA and RF2 bound to ribosome.</title>
        <authorList>
            <person name="Zeng F."/>
            <person name="Chen Y."/>
            <person name="Remis J."/>
            <person name="Shekhar M."/>
            <person name="Phillips J.C."/>
            <person name="Tajkhorshid E."/>
            <person name="Jin H."/>
        </authorList>
    </citation>
    <scope>STRUCTURE BY ELECTRON MICROSCOPY (3.52 ANGSTROMS) OF 70S RIBOSOME IN COMPLEX WITH ARFA AND RF2</scope>
    <scope>SUBUNIT</scope>
</reference>
<reference evidence="16 17" key="21">
    <citation type="journal article" date="2022" name="Nature">
        <title>Ribosome collisions induce mRNA cleavage and ribosome rescue in bacteria.</title>
        <authorList>
            <person name="Saito K."/>
            <person name="Kratzat H."/>
            <person name="Campbell A."/>
            <person name="Buschauer R."/>
            <person name="Burroughs A.M."/>
            <person name="Berninghausen O."/>
            <person name="Aravind L."/>
            <person name="Green R."/>
            <person name="Beckmann R."/>
            <person name="Buskirk A.R."/>
        </authorList>
    </citation>
    <scope>STRUCTURE BY ELECTRON MICROSCOPY (3.37 ANGSTROMS)</scope>
    <scope>INTERACTION WITH SMRB</scope>
    <source>
        <strain>K12 / MG1655 / ATCC 47076</strain>
    </source>
</reference>
<protein>
    <recommendedName>
        <fullName evidence="14">Small ribosomal subunit protein uS5</fullName>
    </recommendedName>
    <alternativeName>
        <fullName>30S ribosomal protein S5</fullName>
    </alternativeName>
</protein>
<accession>P0A7W1</accession>
<accession>O54299</accession>
<accession>P02356</accession>
<accession>Q2M6W8</accession>
<feature type="initiator methionine" description="Removed" evidence="12">
    <location>
        <position position="1"/>
    </location>
</feature>
<feature type="chain" id="PRO_0000131511" description="Small ribosomal subunit protein uS5">
    <location>
        <begin position="2"/>
        <end position="167"/>
    </location>
</feature>
<feature type="domain" description="S5 DRBM">
    <location>
        <begin position="11"/>
        <end position="74"/>
    </location>
</feature>
<feature type="modified residue" description="N-acetylalanine" evidence="12">
    <location>
        <position position="2"/>
    </location>
</feature>
<feature type="sequence variant" description="In strain: SPCR9; spectinomycin resistant. Not a ram mutation.">
    <original>R</original>
    <variation>L</variation>
    <location>
        <position position="20"/>
    </location>
</feature>
<feature type="sequence variant" description="In strain: SPCR7; spectinomycin resistant. Not a ram mutation.">
    <original>V</original>
    <variation>E</variation>
    <location>
        <position position="21"/>
    </location>
</feature>
<feature type="sequence variant" description="In strain: SPCR13 and SPCR15; spectinomycin resistant. Not a ram mutation.">
    <original>S</original>
    <variation>P</variation>
    <location>
        <position position="22"/>
    </location>
</feature>
<feature type="sequence variant" description="In strain: N-660; suppresses S12 streptomycin dependence.">
    <original>G</original>
    <variation>R</variation>
    <location>
        <position position="104"/>
    </location>
</feature>
<feature type="sequence variant" description="In strain: NEA-314; neamycin resistant.">
    <original>R</original>
    <variation>G</variation>
    <location>
        <position position="112"/>
    </location>
</feature>
<feature type="sequence variant" description="In strain: N-421 and D-1023; suppresses S12 streptomycin-dependence.">
    <original>R</original>
    <variation>L</variation>
    <location>
        <position position="112"/>
    </location>
</feature>
<feature type="sequence variant" description="In strain: NEA-319; neamycin resistant.">
    <original>R</original>
    <variation>S</variation>
    <location>
        <position position="112"/>
    </location>
</feature>
<feature type="sequence variant" description="In strain: B.">
    <original>E</original>
    <variation>S</variation>
    <location>
        <position position="151"/>
    </location>
</feature>
<feature type="sequence variant" description="In strain: 0-1; suppresses an alanyl-tRNA synthetase mutation. Blocks ribosome assembly below 25 degrees Celsius.">
    <original>EEILGK</original>
    <variation>G</variation>
    <location>
        <begin position="162"/>
        <end position="167"/>
    </location>
</feature>
<feature type="mutagenesis site" description="No effect on mRNA unwinding ability of the ribosome." evidence="4">
    <original>RVSKTVKGGR</original>
    <variation>AVSKTVKGGA</variation>
    <location>
        <begin position="20"/>
        <end position="29"/>
    </location>
</feature>
<feature type="strand" evidence="19">
    <location>
        <begin position="12"/>
        <end position="24"/>
    </location>
</feature>
<feature type="strand" evidence="19">
    <location>
        <begin position="26"/>
        <end position="40"/>
    </location>
</feature>
<feature type="strand" evidence="19">
    <location>
        <begin position="42"/>
        <end position="55"/>
    </location>
</feature>
<feature type="helix" evidence="19">
    <location>
        <begin position="56"/>
        <end position="69"/>
    </location>
</feature>
<feature type="strand" evidence="19">
    <location>
        <begin position="70"/>
        <end position="73"/>
    </location>
</feature>
<feature type="strand" evidence="18">
    <location>
        <begin position="77"/>
        <end position="80"/>
    </location>
</feature>
<feature type="strand" evidence="19">
    <location>
        <begin position="85"/>
        <end position="89"/>
    </location>
</feature>
<feature type="strand" evidence="19">
    <location>
        <begin position="92"/>
        <end position="98"/>
    </location>
</feature>
<feature type="strand" evidence="19">
    <location>
        <begin position="105"/>
        <end position="107"/>
    </location>
</feature>
<feature type="helix" evidence="19">
    <location>
        <begin position="109"/>
        <end position="118"/>
    </location>
</feature>
<feature type="strand" evidence="19">
    <location>
        <begin position="122"/>
        <end position="129"/>
    </location>
</feature>
<feature type="helix" evidence="19">
    <location>
        <begin position="133"/>
        <end position="145"/>
    </location>
</feature>
<feature type="helix" evidence="19">
    <location>
        <begin position="150"/>
        <end position="157"/>
    </location>
</feature>
<feature type="turn" evidence="19">
    <location>
        <begin position="161"/>
        <end position="163"/>
    </location>
</feature>
<evidence type="ECO:0000269" key="1">
    <source>
    </source>
</evidence>
<evidence type="ECO:0000269" key="2">
    <source>
    </source>
</evidence>
<evidence type="ECO:0000269" key="3">
    <source>
    </source>
</evidence>
<evidence type="ECO:0000269" key="4">
    <source>
    </source>
</evidence>
<evidence type="ECO:0000269" key="5">
    <source>
    </source>
</evidence>
<evidence type="ECO:0000269" key="6">
    <source>
    </source>
</evidence>
<evidence type="ECO:0000269" key="7">
    <source>
    </source>
</evidence>
<evidence type="ECO:0000269" key="8">
    <source>
    </source>
</evidence>
<evidence type="ECO:0000269" key="9">
    <source>
    </source>
</evidence>
<evidence type="ECO:0000269" key="10">
    <source>
    </source>
</evidence>
<evidence type="ECO:0000269" key="11">
    <source>
    </source>
</evidence>
<evidence type="ECO:0000269" key="12">
    <source>
    </source>
</evidence>
<evidence type="ECO:0000269" key="13">
    <source>
    </source>
</evidence>
<evidence type="ECO:0000303" key="14">
    <source>
    </source>
</evidence>
<evidence type="ECO:0000305" key="15"/>
<evidence type="ECO:0007744" key="16">
    <source>
        <dbReference type="PDB" id="7QG8"/>
    </source>
</evidence>
<evidence type="ECO:0007744" key="17">
    <source>
        <dbReference type="PDB" id="7QGH"/>
    </source>
</evidence>
<evidence type="ECO:0007829" key="18">
    <source>
        <dbReference type="PDB" id="7OE0"/>
    </source>
</evidence>
<evidence type="ECO:0007829" key="19">
    <source>
        <dbReference type="PDB" id="8CGJ"/>
    </source>
</evidence>
<name>RS5_ECOLI</name>
<gene>
    <name type="primary">rpsE</name>
    <name type="synonym">spc</name>
    <name type="ordered locus">b3303</name>
    <name type="ordered locus">JW3265</name>
</gene>
<proteinExistence type="evidence at protein level"/>
<sequence length="167" mass="17603">MAHIEKQAGELQEKLIAVNRVSKTVKGGRIFSFTALTVVGDGNGRVGFGYGKAREVPAAIQKAMEKARRNMINVALNNGTLQHPVKGVHTGSRVFMQPASEGTGIIAGGAMRAVLEVAGVHNVLAKAYGSTNPINVVRATIDGLENMNSPEMVAAKRGKSVEEILGK</sequence>
<organism>
    <name type="scientific">Escherichia coli (strain K12)</name>
    <dbReference type="NCBI Taxonomy" id="83333"/>
    <lineage>
        <taxon>Bacteria</taxon>
        <taxon>Pseudomonadati</taxon>
        <taxon>Pseudomonadota</taxon>
        <taxon>Gammaproteobacteria</taxon>
        <taxon>Enterobacterales</taxon>
        <taxon>Enterobacteriaceae</taxon>
        <taxon>Escherichia</taxon>
    </lineage>
</organism>
<comment type="function">
    <text evidence="4">With uS4 and uS12 plays an important role in translational accuracy. Many suppressors of streptomycin-dependent mutants of protein uS12 are found in this protein, some but not all of which decrease translational accuracy (ram, ribosomal ambiguity mutations).</text>
</comment>
<comment type="function">
    <text evidence="4">Located at the back of the 30S subunit body where it stabilizes the conformation of the head with respect to the body.</text>
</comment>
<comment type="function">
    <text evidence="4">The physical location of this protein suggests it may also play a role in mRNA unwinding by the ribosome, possibly by forming part of a processivity clamp.</text>
</comment>
<comment type="subunit">
    <text evidence="1 2 3 4 5 6 7 8 9 10 11 12 13">Part of the 30S ribosomal subunit (PubMed:10094780, PubMed:12244297, PubMed:12809609, PubMed:16272117, PubMed:27906160, PubMed:27906161, PubMed:27934701, PubMed:28077875, PubMed:363452, PubMed:4273819). Contacts proteins uS4 and uS8. With proteins uS4 and uS5 encircles the mRNA as it enters the ribosome, which may play a role in mRNA helicase processivity (PubMed:15652481). Can be cross-linked to mRNA (PubMed:1712292). In collided ribosomes contacts ribosome rescue factor SmrB (PubMed:35264790).</text>
</comment>
<comment type="interaction">
    <interactant intactId="EBI-543949">
        <id>P0A7W1</id>
    </interactant>
    <interactant intactId="EBI-553416">
        <id>P0A7C2</id>
        <label>lexA</label>
    </interactant>
    <organismsDiffer>false</organismsDiffer>
    <experiments>2</experiments>
</comment>
<comment type="interaction">
    <interactant intactId="EBI-543949">
        <id>P0A7W1</id>
    </interactant>
    <interactant intactId="EBI-557325">
        <id>P30850</id>
        <label>rnb</label>
    </interactant>
    <organismsDiffer>false</organismsDiffer>
    <experiments>3</experiments>
</comment>
<comment type="interaction">
    <interactant intactId="EBI-543949">
        <id>P0A7W1</id>
    </interactant>
    <interactant intactId="EBI-542264">
        <id>P0ADZ0</id>
        <label>rplW</label>
    </interactant>
    <organismsDiffer>false</organismsDiffer>
    <experiments>2</experiments>
</comment>
<comment type="domain">
    <text>The N-terminal domain interacts with the head of the 30S subunit; the C-terminal domain interacts with the body and contacts protein uS4. The interaction surface between uS4 and uS5 is involved in control of translational fidelity.</text>
</comment>
<comment type="mass spectrometry" mass="17514.8" method="MALDI" evidence="1"/>
<comment type="miscellaneous">
    <text>Altered uS5 proteins have been identified in a number of mutants. Some mutations in uS5 have been shown to increase translational error frequencies.</text>
</comment>
<comment type="miscellaneous">
    <text>Some mutants in this protein can partially suppress an alanyl-tRNA synthetase mutant.</text>
</comment>
<comment type="similarity">
    <text evidence="15">Belongs to the universal ribosomal protein uS5 family.</text>
</comment>